<comment type="function">
    <text>The proteasome degrades poly-ubiquitinated proteins in the cytoplasm and in the nucleus. It is essential for the regulated turnover of proteins and for the removal of misfolded proteins. The proteasome is a multicatalytic proteinase complex that is characterized by its ability to cleave peptides with Arg, Phe, Tyr, Leu, and Glu adjacent to the leaving group at neutral or slightly basic pH. It has an ATP-dependent proteolytic activity.</text>
</comment>
<comment type="subunit">
    <text evidence="3">The 26S proteasome consists of a 20S proteasome core and two 19S regulatory subunits. The 20S proteasome core is composed of 28 subunits that are arranged in four stacked rings, resulting in a barrel-shaped structure. The two end rings are each formed by seven alpha subunits, and the two central rings are each formed by seven beta subunits. The catalytic chamber with the active sites is on the inside of the barrel.</text>
</comment>
<comment type="interaction">
    <interactant intactId="EBI-13967">
        <id>P23638</id>
    </interactant>
    <interactant intactId="EBI-13963">
        <id>P21242</id>
        <label>PRE10</label>
    </interactant>
    <organismsDiffer>false</organismsDiffer>
    <experiments>3</experiments>
</comment>
<comment type="interaction">
    <interactant intactId="EBI-13967">
        <id>P23638</id>
    </interactant>
    <interactant intactId="EBI-14001">
        <id>P30656</id>
        <label>PRE2</label>
    </interactant>
    <organismsDiffer>false</organismsDiffer>
    <experiments>3</experiments>
</comment>
<comment type="interaction">
    <interactant intactId="EBI-13967">
        <id>P23638</id>
    </interactant>
    <interactant intactId="EBI-13959">
        <id>P23639</id>
        <label>PRE8</label>
    </interactant>
    <organismsDiffer>false</organismsDiffer>
    <experiments>4</experiments>
</comment>
<comment type="interaction">
    <interactant intactId="EBI-13967">
        <id>P23638</id>
    </interactant>
    <interactant intactId="EBI-11219">
        <id>P43588</id>
        <label>RPN11</label>
    </interactant>
    <organismsDiffer>false</organismsDiffer>
    <experiments>2</experiments>
</comment>
<comment type="subcellular location">
    <subcellularLocation>
        <location>Cytoplasm</location>
    </subcellularLocation>
    <subcellularLocation>
        <location>Nucleus</location>
    </subcellularLocation>
</comment>
<comment type="miscellaneous">
    <text evidence="2">Present with 17100 molecules/cell in log phase SD medium.</text>
</comment>
<comment type="similarity">
    <text evidence="1">Belongs to the peptidase T1A family.</text>
</comment>
<name>PSA3_YEAST</name>
<gene>
    <name type="primary">PRE9</name>
    <name type="synonym">PRS5</name>
    <name type="ordered locus">YGR135W</name>
</gene>
<sequence length="258" mass="28714">MGSRRYDSRTTIFSPEGRLYQVEYALESISHAGTAIGIMASDGIVLAAERKVTSTLLEQDTSTEKLYKLNDKIAVAVAGLTADAEILINTARIHAQNYLKTYNEDIPVEILVRRLSDIKQGYTQHGGLRPFGVSFIYAGYDDRYGYQLYTSNPSGNYTGWKAISVGANTSAAQTLLQMDYKDDMKVDDAIELALKTLSKTTDSSALTYDRLEFATIRKGANDGEVYQKIFKPQEIKDILVKTGITKKDEDEEADEDMK</sequence>
<accession>P23638</accession>
<accession>D6VUR7</accession>
<proteinExistence type="evidence at protein level"/>
<reference key="1">
    <citation type="journal article" date="1991" name="Mol. Cell. Biol.">
        <title>Molecular cloning and functional analysis of three subunits of yeast proteasome.</title>
        <authorList>
            <person name="Emori Y."/>
            <person name="Tsukahara T."/>
            <person name="Kawasaki H."/>
            <person name="Ishiura S."/>
            <person name="Sugita H."/>
            <person name="Suzuki K."/>
        </authorList>
    </citation>
    <scope>NUCLEOTIDE SEQUENCE [GENOMIC DNA]</scope>
    <scope>PROTEIN SEQUENCE OF 73-92; 120-139 AND 200-236</scope>
    <source>
        <strain>ATCC 26786 / X2180-1A</strain>
    </source>
</reference>
<reference key="2">
    <citation type="journal article" date="1997" name="Nature">
        <title>The nucleotide sequence of Saccharomyces cerevisiae chromosome VII.</title>
        <authorList>
            <person name="Tettelin H."/>
            <person name="Agostoni-Carbone M.L."/>
            <person name="Albermann K."/>
            <person name="Albers M."/>
            <person name="Arroyo J."/>
            <person name="Backes U."/>
            <person name="Barreiros T."/>
            <person name="Bertani I."/>
            <person name="Bjourson A.J."/>
            <person name="Brueckner M."/>
            <person name="Bruschi C.V."/>
            <person name="Carignani G."/>
            <person name="Castagnoli L."/>
            <person name="Cerdan E."/>
            <person name="Clemente M.L."/>
            <person name="Coblenz A."/>
            <person name="Coglievina M."/>
            <person name="Coissac E."/>
            <person name="Defoor E."/>
            <person name="Del Bino S."/>
            <person name="Delius H."/>
            <person name="Delneri D."/>
            <person name="de Wergifosse P."/>
            <person name="Dujon B."/>
            <person name="Durand P."/>
            <person name="Entian K.-D."/>
            <person name="Eraso P."/>
            <person name="Escribano V."/>
            <person name="Fabiani L."/>
            <person name="Fartmann B."/>
            <person name="Feroli F."/>
            <person name="Feuermann M."/>
            <person name="Frontali L."/>
            <person name="Garcia-Gonzalez M."/>
            <person name="Garcia-Saez M.I."/>
            <person name="Goffeau A."/>
            <person name="Guerreiro P."/>
            <person name="Hani J."/>
            <person name="Hansen M."/>
            <person name="Hebling U."/>
            <person name="Hernandez K."/>
            <person name="Heumann K."/>
            <person name="Hilger F."/>
            <person name="Hofmann B."/>
            <person name="Indge K.J."/>
            <person name="James C.M."/>
            <person name="Klima R."/>
            <person name="Koetter P."/>
            <person name="Kramer B."/>
            <person name="Kramer W."/>
            <person name="Lauquin G."/>
            <person name="Leuther H."/>
            <person name="Louis E.J."/>
            <person name="Maillier E."/>
            <person name="Marconi A."/>
            <person name="Martegani E."/>
            <person name="Mazon M.J."/>
            <person name="Mazzoni C."/>
            <person name="McReynolds A.D.K."/>
            <person name="Melchioretto P."/>
            <person name="Mewes H.-W."/>
            <person name="Minenkova O."/>
            <person name="Mueller-Auer S."/>
            <person name="Nawrocki A."/>
            <person name="Netter P."/>
            <person name="Neu R."/>
            <person name="Nombela C."/>
            <person name="Oliver S.G."/>
            <person name="Panzeri L."/>
            <person name="Paoluzi S."/>
            <person name="Plevani P."/>
            <person name="Portetelle D."/>
            <person name="Portillo F."/>
            <person name="Potier S."/>
            <person name="Purnelle B."/>
            <person name="Rieger M."/>
            <person name="Riles L."/>
            <person name="Rinaldi T."/>
            <person name="Robben J."/>
            <person name="Rodrigues-Pousada C."/>
            <person name="Rodriguez-Belmonte E."/>
            <person name="Rodriguez-Torres A.M."/>
            <person name="Rose M."/>
            <person name="Ruzzi M."/>
            <person name="Saliola M."/>
            <person name="Sanchez-Perez M."/>
            <person name="Schaefer B."/>
            <person name="Schaefer M."/>
            <person name="Scharfe M."/>
            <person name="Schmidheini T."/>
            <person name="Schreer A."/>
            <person name="Skala J."/>
            <person name="Souciet J.-L."/>
            <person name="Steensma H.Y."/>
            <person name="Talla E."/>
            <person name="Thierry A."/>
            <person name="Vandenbol M."/>
            <person name="van der Aart Q.J.M."/>
            <person name="Van Dyck L."/>
            <person name="Vanoni M."/>
            <person name="Verhasselt P."/>
            <person name="Voet M."/>
            <person name="Volckaert G."/>
            <person name="Wambutt R."/>
            <person name="Watson M.D."/>
            <person name="Weber N."/>
            <person name="Wedler E."/>
            <person name="Wedler H."/>
            <person name="Wipfli P."/>
            <person name="Wolf K."/>
            <person name="Wright L.F."/>
            <person name="Zaccaria P."/>
            <person name="Zimmermann M."/>
            <person name="Zollner A."/>
            <person name="Kleine K."/>
        </authorList>
    </citation>
    <scope>NUCLEOTIDE SEQUENCE [LARGE SCALE GENOMIC DNA]</scope>
    <source>
        <strain>ATCC 204508 / S288c</strain>
    </source>
</reference>
<reference key="3">
    <citation type="journal article" date="2014" name="G3 (Bethesda)">
        <title>The reference genome sequence of Saccharomyces cerevisiae: Then and now.</title>
        <authorList>
            <person name="Engel S.R."/>
            <person name="Dietrich F.S."/>
            <person name="Fisk D.G."/>
            <person name="Binkley G."/>
            <person name="Balakrishnan R."/>
            <person name="Costanzo M.C."/>
            <person name="Dwight S.S."/>
            <person name="Hitz B.C."/>
            <person name="Karra K."/>
            <person name="Nash R.S."/>
            <person name="Weng S."/>
            <person name="Wong E.D."/>
            <person name="Lloyd P."/>
            <person name="Skrzypek M.S."/>
            <person name="Miyasato S.R."/>
            <person name="Simison M."/>
            <person name="Cherry J.M."/>
        </authorList>
    </citation>
    <scope>GENOME REANNOTATION</scope>
    <source>
        <strain>ATCC 204508 / S288c</strain>
    </source>
</reference>
<reference key="4">
    <citation type="journal article" date="2003" name="Nature">
        <title>Global analysis of protein expression in yeast.</title>
        <authorList>
            <person name="Ghaemmaghami S."/>
            <person name="Huh W.-K."/>
            <person name="Bower K."/>
            <person name="Howson R.W."/>
            <person name="Belle A."/>
            <person name="Dephoure N."/>
            <person name="O'Shea E.K."/>
            <person name="Weissman J.S."/>
        </authorList>
    </citation>
    <scope>LEVEL OF PROTEIN EXPRESSION [LARGE SCALE ANALYSIS]</scope>
</reference>
<reference key="5">
    <citation type="journal article" date="2003" name="Proc. Natl. Acad. Sci. U.S.A.">
        <title>A subset of membrane-associated proteins is ubiquitinated in response to mutations in the endoplasmic reticulum degradation machinery.</title>
        <authorList>
            <person name="Hitchcock A.L."/>
            <person name="Auld K."/>
            <person name="Gygi S.P."/>
            <person name="Silver P.A."/>
        </authorList>
    </citation>
    <scope>UBIQUITINATION [LARGE SCALE ANALYSIS] AT LYS-199</scope>
    <scope>IDENTIFICATION BY MASS SPECTROMETRY</scope>
</reference>
<reference key="6">
    <citation type="journal article" date="2012" name="Proteomics">
        <title>Sites of ubiquitin attachment in Saccharomyces cerevisiae.</title>
        <authorList>
            <person name="Starita L.M."/>
            <person name="Lo R.S."/>
            <person name="Eng J.K."/>
            <person name="von Haller P.D."/>
            <person name="Fields S."/>
        </authorList>
    </citation>
    <scope>UBIQUITINATION [LARGE SCALE ANALYSIS] AT LYS-100; LYS-199 AND LYS-231</scope>
    <scope>IDENTIFICATION BY MASS SPECTROMETRY [LARGE SCALE ANALYSIS]</scope>
</reference>
<reference key="7">
    <citation type="journal article" date="1997" name="Nature">
        <title>Structure of 20S proteasome from yeast at 2.4-A resolution.</title>
        <authorList>
            <person name="Groll M."/>
            <person name="Ditzel L."/>
            <person name="Loewe J."/>
            <person name="Stock D."/>
            <person name="Bochtler M."/>
            <person name="Bartunik H.D."/>
            <person name="Huber R."/>
        </authorList>
    </citation>
    <scope>X-RAY CRYSTALLOGRAPHY (1.9 ANGSTROMS) OF 2-245 OF COMPLEX WITH THE 20S PROTEASOME</scope>
</reference>
<reference key="8">
    <citation type="journal article" date="2000" name="Nature">
        <title>Structural basis for the activation of 20S proteasomes by 11S regulators.</title>
        <authorList>
            <person name="Whitby F.G."/>
            <person name="Masters E.I."/>
            <person name="Kramer L."/>
            <person name="Knowlton J.R."/>
            <person name="Yao Y."/>
            <person name="Wang C.C."/>
            <person name="Hill C.P."/>
        </authorList>
    </citation>
    <scope>X-RAY CRYSTALLOGRAPHY (3.2 ANGSTROMS) OF 1-245 OF COMPLEX WITH THE 20S PROTEASOME AND A 11S REGULATORY COMPLEX</scope>
</reference>
<reference key="9">
    <citation type="journal article" date="2000" name="Nat. Struct. Biol.">
        <title>A gated channel into the proteasome core particle.</title>
        <authorList>
            <person name="Groll M."/>
            <person name="Bajorek M."/>
            <person name="Koehler A."/>
            <person name="Moroder L."/>
            <person name="Rubin D.M."/>
            <person name="Huber R."/>
            <person name="Glickman M.H."/>
            <person name="Finley D."/>
        </authorList>
    </citation>
    <scope>X-RAY CRYSTALLOGRAPHY (2.4 ANGSTROMS) OF 1-245 OF COMPLEX WITH THE 20S PROTEASOME</scope>
</reference>
<reference key="10">
    <citation type="journal article" date="2006" name="Chem. Biol.">
        <title>TMC-95-based inhibitor design provides evidence for the catalytic versatility of the proteasome.</title>
        <authorList>
            <person name="Groll M."/>
            <person name="Goetz M."/>
            <person name="Kaiser M."/>
            <person name="Weyher E."/>
            <person name="Moroder L."/>
        </authorList>
    </citation>
    <scope>X-RAY CRYSTALLOGRAPHY (2.81 ANGSTROMS) OF 2-245 OF COMPLEX WITH THE 20S PROTEASOME AND A TMC-95-BASED INHIBITOR</scope>
</reference>
<reference key="11">
    <citation type="journal article" date="2006" name="J. Am. Chem. Soc.">
        <title>Crystal structures of salinosporamide A (NPI-0052) and B (NPI-0047) in complex with the 20S proteasome reveal important consequences of beta-lactone ring opening and a mechanism for irreversible binding.</title>
        <authorList>
            <person name="Groll M."/>
            <person name="Huber R."/>
            <person name="Potts B.C.M."/>
        </authorList>
    </citation>
    <scope>X-RAY CRYSTALLOGRAPHY (2.8 ANGSTROMS) OF 2-245 OF COMPLEX WITH THE 20S PROTEASOME AND SALINOSPORAMIDE</scope>
</reference>
<reference key="12">
    <citation type="journal article" date="2006" name="Structure">
        <title>Crystal structure of the boronic acid-based proteasome inhibitor bortezomib in complex with the yeast 20S proteasome.</title>
        <authorList>
            <person name="Groll M."/>
            <person name="Berkers C.R."/>
            <person name="Ploegh H.L."/>
            <person name="Ovaa H."/>
        </authorList>
    </citation>
    <scope>X-RAY CRYSTALLOGRAPHY (2.8 ANGSTROMS) OF 2-245 OF COMPLEX WITH THE 20S PROTEASOME AND BORTEZOMIB</scope>
</reference>
<reference key="13">
    <citation type="journal article" date="2010" name="Mol. Cell">
        <title>Structure of a Blm10 complex reveals common mechanisms for proteasome binding and gate opening.</title>
        <authorList>
            <person name="Sadre-Bazzaz K."/>
            <person name="Whitby F.G."/>
            <person name="Robinson H."/>
            <person name="Formosa T."/>
            <person name="Hill C.P."/>
        </authorList>
    </citation>
    <scope>X-RAY CRYSTALLOGRAPHY (3.0 ANGSTROMS) OF 14-245 IN COMPLEX WITH THE PROTEASOME</scope>
</reference>
<reference key="14">
    <citation type="journal article" date="2012" name="Proc. Natl. Acad. Sci. U.S.A.">
        <title>Near-atomic resolution structural model of the yeast 26S proteasome.</title>
        <authorList>
            <person name="Beck F."/>
            <person name="Unverdorben P."/>
            <person name="Bohn S."/>
            <person name="Schweitzer A."/>
            <person name="Pfeifer G."/>
            <person name="Sakata E."/>
            <person name="Nickell S."/>
            <person name="Plitzko J.M."/>
            <person name="Villa E."/>
            <person name="Baumeister W."/>
            <person name="Forster F."/>
        </authorList>
    </citation>
    <scope>STRUCTURE BY ELECTRON MICROSCOPY (7.4 ANGSTROMS) OF THE 26S PROTEASOME</scope>
</reference>
<keyword id="KW-0002">3D-structure</keyword>
<keyword id="KW-0963">Cytoplasm</keyword>
<keyword id="KW-0903">Direct protein sequencing</keyword>
<keyword id="KW-1017">Isopeptide bond</keyword>
<keyword id="KW-0539">Nucleus</keyword>
<keyword id="KW-0647">Proteasome</keyword>
<keyword id="KW-1185">Reference proteome</keyword>
<keyword id="KW-0832">Ubl conjugation</keyword>
<evidence type="ECO:0000255" key="1">
    <source>
        <dbReference type="PROSITE-ProRule" id="PRU00808"/>
    </source>
</evidence>
<evidence type="ECO:0000269" key="2">
    <source>
    </source>
</evidence>
<evidence type="ECO:0000269" key="3">
    <source>
    </source>
</evidence>
<evidence type="ECO:0007744" key="4">
    <source>
    </source>
</evidence>
<evidence type="ECO:0007829" key="5">
    <source>
        <dbReference type="PDB" id="1RYP"/>
    </source>
</evidence>
<evidence type="ECO:0007829" key="6">
    <source>
        <dbReference type="PDB" id="3BDM"/>
    </source>
</evidence>
<evidence type="ECO:0007829" key="7">
    <source>
        <dbReference type="PDB" id="8U7U"/>
    </source>
</evidence>
<evidence type="ECO:0007829" key="8">
    <source>
        <dbReference type="PDB" id="9D0T"/>
    </source>
</evidence>
<feature type="chain" id="PRO_0000124116" description="Proteasome subunit alpha type-3">
    <location>
        <begin position="1"/>
        <end position="258"/>
    </location>
</feature>
<feature type="cross-link" description="Glycyl lysine isopeptide (Lys-Gly) (interchain with G-Cter in ubiquitin)" evidence="4">
    <location>
        <position position="100"/>
    </location>
</feature>
<feature type="cross-link" description="Glycyl lysine isopeptide (Lys-Gly) (interchain with G-Cter in ubiquitin)" evidence="4">
    <location>
        <position position="199"/>
    </location>
</feature>
<feature type="cross-link" description="Glycyl lysine isopeptide (Lys-Gly) (interchain with G-Cter in ubiquitin)" evidence="4">
    <location>
        <position position="231"/>
    </location>
</feature>
<feature type="helix" evidence="5">
    <location>
        <begin position="4"/>
        <end position="6"/>
    </location>
</feature>
<feature type="strand" evidence="8">
    <location>
        <begin position="16"/>
        <end position="18"/>
    </location>
</feature>
<feature type="helix" evidence="5">
    <location>
        <begin position="20"/>
        <end position="29"/>
    </location>
</feature>
<feature type="strand" evidence="5">
    <location>
        <begin position="35"/>
        <end position="40"/>
    </location>
</feature>
<feature type="strand" evidence="5">
    <location>
        <begin position="43"/>
        <end position="49"/>
    </location>
</feature>
<feature type="strand" evidence="5">
    <location>
        <begin position="55"/>
        <end position="57"/>
    </location>
</feature>
<feature type="turn" evidence="7">
    <location>
        <begin position="59"/>
        <end position="61"/>
    </location>
</feature>
<feature type="strand" evidence="5">
    <location>
        <begin position="64"/>
        <end position="79"/>
    </location>
</feature>
<feature type="helix" evidence="5">
    <location>
        <begin position="81"/>
        <end position="102"/>
    </location>
</feature>
<feature type="helix" evidence="5">
    <location>
        <begin position="108"/>
        <end position="124"/>
    </location>
</feature>
<feature type="strand" evidence="5">
    <location>
        <begin position="125"/>
        <end position="127"/>
    </location>
</feature>
<feature type="strand" evidence="5">
    <location>
        <begin position="133"/>
        <end position="141"/>
    </location>
</feature>
<feature type="turn" evidence="5">
    <location>
        <begin position="142"/>
        <end position="144"/>
    </location>
</feature>
<feature type="strand" evidence="5">
    <location>
        <begin position="145"/>
        <end position="151"/>
    </location>
</feature>
<feature type="strand" evidence="5">
    <location>
        <begin position="157"/>
        <end position="166"/>
    </location>
</feature>
<feature type="helix" evidence="5">
    <location>
        <begin position="169"/>
        <end position="179"/>
    </location>
</feature>
<feature type="helix" evidence="5">
    <location>
        <begin position="186"/>
        <end position="200"/>
    </location>
</feature>
<feature type="strand" evidence="5">
    <location>
        <begin position="202"/>
        <end position="205"/>
    </location>
</feature>
<feature type="helix" evidence="5">
    <location>
        <begin position="208"/>
        <end position="210"/>
    </location>
</feature>
<feature type="strand" evidence="5">
    <location>
        <begin position="211"/>
        <end position="217"/>
    </location>
</feature>
<feature type="strand" evidence="5">
    <location>
        <begin position="220"/>
        <end position="224"/>
    </location>
</feature>
<feature type="strand" evidence="5">
    <location>
        <begin position="226"/>
        <end position="229"/>
    </location>
</feature>
<feature type="helix" evidence="5">
    <location>
        <begin position="232"/>
        <end position="241"/>
    </location>
</feature>
<feature type="turn" evidence="6">
    <location>
        <begin position="242"/>
        <end position="244"/>
    </location>
</feature>
<protein>
    <recommendedName>
        <fullName>Proteasome subunit alpha type-3</fullName>
    </recommendedName>
    <alternativeName>
        <fullName>Macropain subunit Y13</fullName>
    </alternativeName>
    <alternativeName>
        <fullName>Multicatalytic endopeptidase complex subunit Y13</fullName>
    </alternativeName>
    <alternativeName>
        <fullName>Proteasome component Y13</fullName>
    </alternativeName>
    <alternativeName>
        <fullName>Proteinase YSCE subunit 13</fullName>
    </alternativeName>
</protein>
<dbReference type="EMBL" id="M63851">
    <property type="protein sequence ID" value="AAA34907.1"/>
    <property type="molecule type" value="Genomic_DNA"/>
</dbReference>
<dbReference type="EMBL" id="X56730">
    <property type="protein sequence ID" value="CAA40054.1"/>
    <property type="molecule type" value="Genomic_DNA"/>
</dbReference>
<dbReference type="EMBL" id="Z72920">
    <property type="protein sequence ID" value="CAA97148.1"/>
    <property type="molecule type" value="Genomic_DNA"/>
</dbReference>
<dbReference type="EMBL" id="BK006941">
    <property type="protein sequence ID" value="DAA08228.1"/>
    <property type="molecule type" value="Genomic_DNA"/>
</dbReference>
<dbReference type="PIR" id="S12940">
    <property type="entry name" value="SNBYY3"/>
</dbReference>
<dbReference type="RefSeq" id="NP_011651.3">
    <property type="nucleotide sequence ID" value="NM_001181264.3"/>
</dbReference>
<dbReference type="PDB" id="1FNT">
    <property type="method" value="X-ray"/>
    <property type="resolution" value="3.20 A"/>
    <property type="chains" value="C/Q=1-245"/>
</dbReference>
<dbReference type="PDB" id="1G0U">
    <property type="method" value="X-ray"/>
    <property type="resolution" value="2.40 A"/>
    <property type="chains" value="B/P=1-245"/>
</dbReference>
<dbReference type="PDB" id="1G65">
    <property type="method" value="X-ray"/>
    <property type="resolution" value="2.25 A"/>
    <property type="chains" value="B/P=2-245"/>
</dbReference>
<dbReference type="PDB" id="1JD2">
    <property type="method" value="X-ray"/>
    <property type="resolution" value="3.00 A"/>
    <property type="chains" value="B/W=2-245"/>
</dbReference>
<dbReference type="PDB" id="1RYP">
    <property type="method" value="X-ray"/>
    <property type="resolution" value="1.90 A"/>
    <property type="chains" value="C/Q=2-245"/>
</dbReference>
<dbReference type="PDB" id="1Z7Q">
    <property type="method" value="X-ray"/>
    <property type="resolution" value="3.22 A"/>
    <property type="chains" value="C/Q=1-258"/>
</dbReference>
<dbReference type="PDB" id="2F16">
    <property type="method" value="X-ray"/>
    <property type="resolution" value="2.80 A"/>
    <property type="chains" value="B/P=2-245"/>
</dbReference>
<dbReference type="PDB" id="2FAK">
    <property type="method" value="X-ray"/>
    <property type="resolution" value="2.80 A"/>
    <property type="chains" value="B/P=2-245"/>
</dbReference>
<dbReference type="PDB" id="2GPL">
    <property type="method" value="X-ray"/>
    <property type="resolution" value="2.81 A"/>
    <property type="chains" value="B/P=2-245"/>
</dbReference>
<dbReference type="PDB" id="2ZCY">
    <property type="method" value="X-ray"/>
    <property type="resolution" value="2.90 A"/>
    <property type="chains" value="B/P=1-258"/>
</dbReference>
<dbReference type="PDB" id="3BDM">
    <property type="method" value="X-ray"/>
    <property type="resolution" value="2.70 A"/>
    <property type="chains" value="B/P=1-258"/>
</dbReference>
<dbReference type="PDB" id="3D29">
    <property type="method" value="X-ray"/>
    <property type="resolution" value="2.60 A"/>
    <property type="chains" value="B/P=2-245"/>
</dbReference>
<dbReference type="PDB" id="3DY3">
    <property type="method" value="X-ray"/>
    <property type="resolution" value="2.81 A"/>
    <property type="chains" value="B/P=2-245"/>
</dbReference>
<dbReference type="PDB" id="3DY4">
    <property type="method" value="X-ray"/>
    <property type="resolution" value="2.80 A"/>
    <property type="chains" value="B/P=2-245"/>
</dbReference>
<dbReference type="PDB" id="3E47">
    <property type="method" value="X-ray"/>
    <property type="resolution" value="3.00 A"/>
    <property type="chains" value="B/P=2-245"/>
</dbReference>
<dbReference type="PDB" id="3GPJ">
    <property type="method" value="X-ray"/>
    <property type="resolution" value="2.70 A"/>
    <property type="chains" value="B/P=2-245"/>
</dbReference>
<dbReference type="PDB" id="3GPT">
    <property type="method" value="X-ray"/>
    <property type="resolution" value="2.41 A"/>
    <property type="chains" value="B/P=2-245"/>
</dbReference>
<dbReference type="PDB" id="3GPW">
    <property type="method" value="X-ray"/>
    <property type="resolution" value="2.50 A"/>
    <property type="chains" value="B/P=2-245"/>
</dbReference>
<dbReference type="PDB" id="3HYE">
    <property type="method" value="X-ray"/>
    <property type="resolution" value="2.50 A"/>
    <property type="chains" value="B/P=2-245"/>
</dbReference>
<dbReference type="PDB" id="3JCO">
    <property type="method" value="EM"/>
    <property type="resolution" value="4.80 A"/>
    <property type="chains" value="C/c=1-258"/>
</dbReference>
<dbReference type="PDB" id="3JCP">
    <property type="method" value="EM"/>
    <property type="resolution" value="4.60 A"/>
    <property type="chains" value="C/c=1-258"/>
</dbReference>
<dbReference type="PDB" id="3MG0">
    <property type="method" value="X-ray"/>
    <property type="resolution" value="2.68 A"/>
    <property type="chains" value="B/P=2-245"/>
</dbReference>
<dbReference type="PDB" id="3MG4">
    <property type="method" value="X-ray"/>
    <property type="resolution" value="3.11 A"/>
    <property type="chains" value="B/P=2-245"/>
</dbReference>
<dbReference type="PDB" id="3MG6">
    <property type="method" value="X-ray"/>
    <property type="resolution" value="2.60 A"/>
    <property type="chains" value="B/P=1-245"/>
</dbReference>
<dbReference type="PDB" id="3MG7">
    <property type="method" value="X-ray"/>
    <property type="resolution" value="2.78 A"/>
    <property type="chains" value="B/P=1-245"/>
</dbReference>
<dbReference type="PDB" id="3MG8">
    <property type="method" value="X-ray"/>
    <property type="resolution" value="2.59 A"/>
    <property type="chains" value="B/P=1-245"/>
</dbReference>
<dbReference type="PDB" id="3NZJ">
    <property type="method" value="X-ray"/>
    <property type="resolution" value="2.40 A"/>
    <property type="chains" value="B/P=1-258"/>
</dbReference>
<dbReference type="PDB" id="3NZW">
    <property type="method" value="X-ray"/>
    <property type="resolution" value="2.50 A"/>
    <property type="chains" value="B/P=1-258"/>
</dbReference>
<dbReference type="PDB" id="3NZX">
    <property type="method" value="X-ray"/>
    <property type="resolution" value="2.70 A"/>
    <property type="chains" value="B/P=1-258"/>
</dbReference>
<dbReference type="PDB" id="3OEU">
    <property type="method" value="X-ray"/>
    <property type="resolution" value="2.60 A"/>
    <property type="chains" value="B/P=11-245"/>
</dbReference>
<dbReference type="PDB" id="3OEV">
    <property type="method" value="X-ray"/>
    <property type="resolution" value="2.85 A"/>
    <property type="chains" value="B/P=11-245"/>
</dbReference>
<dbReference type="PDB" id="3OKJ">
    <property type="method" value="X-ray"/>
    <property type="resolution" value="2.70 A"/>
    <property type="chains" value="B/P=2-245"/>
</dbReference>
<dbReference type="PDB" id="3SDI">
    <property type="method" value="X-ray"/>
    <property type="resolution" value="2.65 A"/>
    <property type="chains" value="B/P=11-245"/>
</dbReference>
<dbReference type="PDB" id="3SDK">
    <property type="method" value="X-ray"/>
    <property type="resolution" value="2.70 A"/>
    <property type="chains" value="B/P=11-245"/>
</dbReference>
<dbReference type="PDB" id="3SHJ">
    <property type="method" value="X-ray"/>
    <property type="resolution" value="2.80 A"/>
    <property type="chains" value="B/P=2-245"/>
</dbReference>
<dbReference type="PDB" id="3TDD">
    <property type="method" value="X-ray"/>
    <property type="resolution" value="2.70 A"/>
    <property type="chains" value="B/P=2-245"/>
</dbReference>
<dbReference type="PDB" id="3UN4">
    <property type="method" value="X-ray"/>
    <property type="resolution" value="3.40 A"/>
    <property type="chains" value="B/P=1-258"/>
</dbReference>
<dbReference type="PDB" id="3UN8">
    <property type="method" value="X-ray"/>
    <property type="resolution" value="2.70 A"/>
    <property type="chains" value="B/P=1-258"/>
</dbReference>
<dbReference type="PDB" id="3WXR">
    <property type="method" value="X-ray"/>
    <property type="resolution" value="3.15 A"/>
    <property type="chains" value="C/Q=1-258"/>
</dbReference>
<dbReference type="PDB" id="4CR2">
    <property type="method" value="EM"/>
    <property type="resolution" value="7.70 A"/>
    <property type="chains" value="C=1-258"/>
</dbReference>
<dbReference type="PDB" id="4CR3">
    <property type="method" value="EM"/>
    <property type="resolution" value="9.30 A"/>
    <property type="chains" value="C=1-258"/>
</dbReference>
<dbReference type="PDB" id="4CR4">
    <property type="method" value="EM"/>
    <property type="resolution" value="8.80 A"/>
    <property type="chains" value="C=1-258"/>
</dbReference>
<dbReference type="PDB" id="4EU2">
    <property type="method" value="X-ray"/>
    <property type="resolution" value="2.51 A"/>
    <property type="chains" value="C/Q=2-245"/>
</dbReference>
<dbReference type="PDB" id="4FZC">
    <property type="method" value="X-ray"/>
    <property type="resolution" value="2.80 A"/>
    <property type="chains" value="B/P=2-245"/>
</dbReference>
<dbReference type="PDB" id="4FZG">
    <property type="method" value="X-ray"/>
    <property type="resolution" value="3.00 A"/>
    <property type="chains" value="B/P=2-245"/>
</dbReference>
<dbReference type="PDB" id="4G4S">
    <property type="method" value="X-ray"/>
    <property type="resolution" value="2.49 A"/>
    <property type="chains" value="C=1-258"/>
</dbReference>
<dbReference type="PDB" id="4GK7">
    <property type="method" value="X-ray"/>
    <property type="resolution" value="2.80 A"/>
    <property type="chains" value="B/P=2-245"/>
</dbReference>
<dbReference type="PDB" id="4HNP">
    <property type="method" value="X-ray"/>
    <property type="resolution" value="2.80 A"/>
    <property type="chains" value="B/P=2-245"/>
</dbReference>
<dbReference type="PDB" id="4HRC">
    <property type="method" value="X-ray"/>
    <property type="resolution" value="2.80 A"/>
    <property type="chains" value="B/P=2-245"/>
</dbReference>
<dbReference type="PDB" id="4HRD">
    <property type="method" value="X-ray"/>
    <property type="resolution" value="2.80 A"/>
    <property type="chains" value="B/P=2-245"/>
</dbReference>
<dbReference type="PDB" id="4INR">
    <property type="method" value="X-ray"/>
    <property type="resolution" value="2.70 A"/>
    <property type="chains" value="B/P=1-258"/>
</dbReference>
<dbReference type="PDB" id="4INT">
    <property type="method" value="X-ray"/>
    <property type="resolution" value="2.90 A"/>
    <property type="chains" value="B/P=1-258"/>
</dbReference>
<dbReference type="PDB" id="4INU">
    <property type="method" value="X-ray"/>
    <property type="resolution" value="3.10 A"/>
    <property type="chains" value="B/P=1-258"/>
</dbReference>
<dbReference type="PDB" id="4J70">
    <property type="method" value="X-ray"/>
    <property type="resolution" value="2.80 A"/>
    <property type="chains" value="B/P=1-258"/>
</dbReference>
<dbReference type="PDB" id="4JSQ">
    <property type="method" value="X-ray"/>
    <property type="resolution" value="2.80 A"/>
    <property type="chains" value="B/P=1-258"/>
</dbReference>
<dbReference type="PDB" id="4JSU">
    <property type="method" value="X-ray"/>
    <property type="resolution" value="2.90 A"/>
    <property type="chains" value="B/P=1-258"/>
</dbReference>
<dbReference type="PDB" id="4JT0">
    <property type="method" value="X-ray"/>
    <property type="resolution" value="3.10 A"/>
    <property type="chains" value="B/P=1-258"/>
</dbReference>
<dbReference type="PDB" id="4LQI">
    <property type="method" value="X-ray"/>
    <property type="resolution" value="2.70 A"/>
    <property type="chains" value="B/P=2-245"/>
</dbReference>
<dbReference type="PDB" id="4LTC">
    <property type="method" value="X-ray"/>
    <property type="resolution" value="2.50 A"/>
    <property type="chains" value="B/P=1-258"/>
</dbReference>
<dbReference type="PDB" id="4NNN">
    <property type="method" value="X-ray"/>
    <property type="resolution" value="2.50 A"/>
    <property type="chains" value="B/P=1-258"/>
</dbReference>
<dbReference type="PDB" id="4NNW">
    <property type="method" value="X-ray"/>
    <property type="resolution" value="2.60 A"/>
    <property type="chains" value="B/P=1-258"/>
</dbReference>
<dbReference type="PDB" id="4NO1">
    <property type="method" value="X-ray"/>
    <property type="resolution" value="2.50 A"/>
    <property type="chains" value="B/P=1-258"/>
</dbReference>
<dbReference type="PDB" id="4NO6">
    <property type="method" value="X-ray"/>
    <property type="resolution" value="3.00 A"/>
    <property type="chains" value="B/P=1-258"/>
</dbReference>
<dbReference type="PDB" id="4NO8">
    <property type="method" value="X-ray"/>
    <property type="resolution" value="2.70 A"/>
    <property type="chains" value="B/P=1-258"/>
</dbReference>
<dbReference type="PDB" id="4NO9">
    <property type="method" value="X-ray"/>
    <property type="resolution" value="2.90 A"/>
    <property type="chains" value="B/P=1-258"/>
</dbReference>
<dbReference type="PDB" id="4Q1S">
    <property type="method" value="X-ray"/>
    <property type="resolution" value="2.60 A"/>
    <property type="chains" value="B/P=1-258"/>
</dbReference>
<dbReference type="PDB" id="4QBY">
    <property type="method" value="X-ray"/>
    <property type="resolution" value="3.00 A"/>
    <property type="chains" value="B/P=1-258"/>
</dbReference>
<dbReference type="PDB" id="4QLQ">
    <property type="method" value="X-ray"/>
    <property type="resolution" value="2.40 A"/>
    <property type="chains" value="B/P=1-258"/>
</dbReference>
<dbReference type="PDB" id="4QLS">
    <property type="method" value="X-ray"/>
    <property type="resolution" value="2.80 A"/>
    <property type="chains" value="B/P=1-258"/>
</dbReference>
<dbReference type="PDB" id="4QLT">
    <property type="method" value="X-ray"/>
    <property type="resolution" value="2.80 A"/>
    <property type="chains" value="B/P=1-258"/>
</dbReference>
<dbReference type="PDB" id="4QLU">
    <property type="method" value="X-ray"/>
    <property type="resolution" value="2.80 A"/>
    <property type="chains" value="B/P=1-258"/>
</dbReference>
<dbReference type="PDB" id="4QLV">
    <property type="method" value="X-ray"/>
    <property type="resolution" value="2.90 A"/>
    <property type="chains" value="B/P=1-258"/>
</dbReference>
<dbReference type="PDB" id="4QUX">
    <property type="method" value="X-ray"/>
    <property type="resolution" value="3.00 A"/>
    <property type="chains" value="B/P=1-258"/>
</dbReference>
<dbReference type="PDB" id="4QUY">
    <property type="method" value="X-ray"/>
    <property type="resolution" value="2.80 A"/>
    <property type="chains" value="B/P=1-258"/>
</dbReference>
<dbReference type="PDB" id="4QV0">
    <property type="method" value="X-ray"/>
    <property type="resolution" value="3.10 A"/>
    <property type="chains" value="B/P=1-258"/>
</dbReference>
<dbReference type="PDB" id="4QV1">
    <property type="method" value="X-ray"/>
    <property type="resolution" value="2.50 A"/>
    <property type="chains" value="B/P=1-258"/>
</dbReference>
<dbReference type="PDB" id="4QV3">
    <property type="method" value="X-ray"/>
    <property type="resolution" value="3.00 A"/>
    <property type="chains" value="B/P=1-258"/>
</dbReference>
<dbReference type="PDB" id="4QV4">
    <property type="method" value="X-ray"/>
    <property type="resolution" value="2.70 A"/>
    <property type="chains" value="B/P=1-258"/>
</dbReference>
<dbReference type="PDB" id="4QV5">
    <property type="method" value="X-ray"/>
    <property type="resolution" value="2.70 A"/>
    <property type="chains" value="B/P=1-258"/>
</dbReference>
<dbReference type="PDB" id="4QV6">
    <property type="method" value="X-ray"/>
    <property type="resolution" value="2.80 A"/>
    <property type="chains" value="B/P=1-258"/>
</dbReference>
<dbReference type="PDB" id="4QV7">
    <property type="method" value="X-ray"/>
    <property type="resolution" value="2.60 A"/>
    <property type="chains" value="B/P=1-258"/>
</dbReference>
<dbReference type="PDB" id="4QV8">
    <property type="method" value="X-ray"/>
    <property type="resolution" value="2.90 A"/>
    <property type="chains" value="B/P=1-258"/>
</dbReference>
<dbReference type="PDB" id="4QV9">
    <property type="method" value="X-ray"/>
    <property type="resolution" value="2.60 A"/>
    <property type="chains" value="B/P=1-258"/>
</dbReference>
<dbReference type="PDB" id="4QVL">
    <property type="method" value="X-ray"/>
    <property type="resolution" value="2.80 A"/>
    <property type="chains" value="B/P=1-258"/>
</dbReference>
<dbReference type="PDB" id="4QVM">
    <property type="method" value="X-ray"/>
    <property type="resolution" value="2.80 A"/>
    <property type="chains" value="B/P=1-258"/>
</dbReference>
<dbReference type="PDB" id="4QVN">
    <property type="method" value="X-ray"/>
    <property type="resolution" value="2.90 A"/>
    <property type="chains" value="B/P=1-258"/>
</dbReference>
<dbReference type="PDB" id="4QVP">
    <property type="method" value="X-ray"/>
    <property type="resolution" value="2.30 A"/>
    <property type="chains" value="B/P=1-258"/>
</dbReference>
<dbReference type="PDB" id="4QVQ">
    <property type="method" value="X-ray"/>
    <property type="resolution" value="2.60 A"/>
    <property type="chains" value="B/P=1-258"/>
</dbReference>
<dbReference type="PDB" id="4QVV">
    <property type="method" value="X-ray"/>
    <property type="resolution" value="2.80 A"/>
    <property type="chains" value="B/P=1-258"/>
</dbReference>
<dbReference type="PDB" id="4QVW">
    <property type="method" value="X-ray"/>
    <property type="resolution" value="3.00 A"/>
    <property type="chains" value="B/P=1-258"/>
</dbReference>
<dbReference type="PDB" id="4QVY">
    <property type="method" value="X-ray"/>
    <property type="resolution" value="2.51 A"/>
    <property type="chains" value="B/P=1-258"/>
</dbReference>
<dbReference type="PDB" id="4QW0">
    <property type="method" value="X-ray"/>
    <property type="resolution" value="2.90 A"/>
    <property type="chains" value="B/P=1-258"/>
</dbReference>
<dbReference type="PDB" id="4QW1">
    <property type="method" value="X-ray"/>
    <property type="resolution" value="2.90 A"/>
    <property type="chains" value="B/P=1-258"/>
</dbReference>
<dbReference type="PDB" id="4QW3">
    <property type="method" value="X-ray"/>
    <property type="resolution" value="2.90 A"/>
    <property type="chains" value="B/P=1-258"/>
</dbReference>
<dbReference type="PDB" id="4QW4">
    <property type="method" value="X-ray"/>
    <property type="resolution" value="2.80 A"/>
    <property type="chains" value="B/P=1-258"/>
</dbReference>
<dbReference type="PDB" id="4QW5">
    <property type="method" value="X-ray"/>
    <property type="resolution" value="3.00 A"/>
    <property type="chains" value="B/P=1-258"/>
</dbReference>
<dbReference type="PDB" id="4QW6">
    <property type="method" value="X-ray"/>
    <property type="resolution" value="2.90 A"/>
    <property type="chains" value="B/P=1-258"/>
</dbReference>
<dbReference type="PDB" id="4QW7">
    <property type="method" value="X-ray"/>
    <property type="resolution" value="2.70 A"/>
    <property type="chains" value="B/P=1-258"/>
</dbReference>
<dbReference type="PDB" id="4QWF">
    <property type="method" value="X-ray"/>
    <property type="resolution" value="3.00 A"/>
    <property type="chains" value="B/P=1-258"/>
</dbReference>
<dbReference type="PDB" id="4QWG">
    <property type="method" value="X-ray"/>
    <property type="resolution" value="2.60 A"/>
    <property type="chains" value="B/P=1-258"/>
</dbReference>
<dbReference type="PDB" id="4QWI">
    <property type="method" value="X-ray"/>
    <property type="resolution" value="2.60 A"/>
    <property type="chains" value="B/P=1-258"/>
</dbReference>
<dbReference type="PDB" id="4QWJ">
    <property type="method" value="X-ray"/>
    <property type="resolution" value="2.90 A"/>
    <property type="chains" value="B/P=1-258"/>
</dbReference>
<dbReference type="PDB" id="4QWK">
    <property type="method" value="X-ray"/>
    <property type="resolution" value="2.80 A"/>
    <property type="chains" value="B/P=1-258"/>
</dbReference>
<dbReference type="PDB" id="4QWL">
    <property type="method" value="X-ray"/>
    <property type="resolution" value="2.60 A"/>
    <property type="chains" value="B/P=1-258"/>
</dbReference>
<dbReference type="PDB" id="4QWR">
    <property type="method" value="X-ray"/>
    <property type="resolution" value="2.90 A"/>
    <property type="chains" value="B/P=1-258"/>
</dbReference>
<dbReference type="PDB" id="4QWS">
    <property type="method" value="X-ray"/>
    <property type="resolution" value="3.00 A"/>
    <property type="chains" value="B/P=1-258"/>
</dbReference>
<dbReference type="PDB" id="4QWU">
    <property type="method" value="X-ray"/>
    <property type="resolution" value="3.00 A"/>
    <property type="chains" value="B/P=1-258"/>
</dbReference>
<dbReference type="PDB" id="4QWX">
    <property type="method" value="X-ray"/>
    <property type="resolution" value="2.90 A"/>
    <property type="chains" value="B/P=1-258"/>
</dbReference>
<dbReference type="PDB" id="4QXJ">
    <property type="method" value="X-ray"/>
    <property type="resolution" value="2.80 A"/>
    <property type="chains" value="B/P=1-258"/>
</dbReference>
<dbReference type="PDB" id="4QZ0">
    <property type="method" value="X-ray"/>
    <property type="resolution" value="3.00 A"/>
    <property type="chains" value="B/P=1-258"/>
</dbReference>
<dbReference type="PDB" id="4QZ1">
    <property type="method" value="X-ray"/>
    <property type="resolution" value="3.00 A"/>
    <property type="chains" value="B/P=1-258"/>
</dbReference>
<dbReference type="PDB" id="4QZ2">
    <property type="method" value="X-ray"/>
    <property type="resolution" value="2.70 A"/>
    <property type="chains" value="B/P=1-258"/>
</dbReference>
<dbReference type="PDB" id="4QZ3">
    <property type="method" value="X-ray"/>
    <property type="resolution" value="2.80 A"/>
    <property type="chains" value="B/P=1-258"/>
</dbReference>
<dbReference type="PDB" id="4QZ4">
    <property type="method" value="X-ray"/>
    <property type="resolution" value="3.00 A"/>
    <property type="chains" value="B/P=1-258"/>
</dbReference>
<dbReference type="PDB" id="4QZ5">
    <property type="method" value="X-ray"/>
    <property type="resolution" value="2.80 A"/>
    <property type="chains" value="B/P=1-258"/>
</dbReference>
<dbReference type="PDB" id="4QZ6">
    <property type="method" value="X-ray"/>
    <property type="resolution" value="2.90 A"/>
    <property type="chains" value="B/P=1-258"/>
</dbReference>
<dbReference type="PDB" id="4QZ7">
    <property type="method" value="X-ray"/>
    <property type="resolution" value="2.80 A"/>
    <property type="chains" value="B/P=1-258"/>
</dbReference>
<dbReference type="PDB" id="4QZW">
    <property type="method" value="X-ray"/>
    <property type="resolution" value="3.00 A"/>
    <property type="chains" value="B/P=1-258"/>
</dbReference>
<dbReference type="PDB" id="4QZX">
    <property type="method" value="X-ray"/>
    <property type="resolution" value="2.60 A"/>
    <property type="chains" value="B/P=1-258"/>
</dbReference>
<dbReference type="PDB" id="4QZZ">
    <property type="method" value="X-ray"/>
    <property type="resolution" value="2.90 A"/>
    <property type="chains" value="B/P=1-258"/>
</dbReference>
<dbReference type="PDB" id="4R00">
    <property type="method" value="X-ray"/>
    <property type="resolution" value="2.80 A"/>
    <property type="chains" value="B/P=1-258"/>
</dbReference>
<dbReference type="PDB" id="4R02">
    <property type="method" value="X-ray"/>
    <property type="resolution" value="2.50 A"/>
    <property type="chains" value="B/P=1-258"/>
</dbReference>
<dbReference type="PDB" id="4R17">
    <property type="method" value="X-ray"/>
    <property type="resolution" value="2.10 A"/>
    <property type="chains" value="B/P=1-258"/>
</dbReference>
<dbReference type="PDB" id="4R18">
    <property type="method" value="X-ray"/>
    <property type="resolution" value="2.40 A"/>
    <property type="chains" value="B/P=1-258"/>
</dbReference>
<dbReference type="PDB" id="4RUR">
    <property type="method" value="X-ray"/>
    <property type="resolution" value="2.50 A"/>
    <property type="chains" value="B/P=1-258"/>
</dbReference>
<dbReference type="PDB" id="4V7O">
    <property type="method" value="X-ray"/>
    <property type="resolution" value="3.00 A"/>
    <property type="chains" value="AH/AT/BC/BQ=14-245"/>
</dbReference>
<dbReference type="PDB" id="4X6Z">
    <property type="method" value="X-ray"/>
    <property type="resolution" value="2.70 A"/>
    <property type="chains" value="C/Q=1-258"/>
</dbReference>
<dbReference type="PDB" id="4Y69">
    <property type="method" value="X-ray"/>
    <property type="resolution" value="2.90 A"/>
    <property type="chains" value="B/P=1-258"/>
</dbReference>
<dbReference type="PDB" id="4Y6A">
    <property type="method" value="X-ray"/>
    <property type="resolution" value="2.60 A"/>
    <property type="chains" value="B/P=1-258"/>
</dbReference>
<dbReference type="PDB" id="4Y6V">
    <property type="method" value="X-ray"/>
    <property type="resolution" value="2.80 A"/>
    <property type="chains" value="B/P=1-258"/>
</dbReference>
<dbReference type="PDB" id="4Y6Z">
    <property type="method" value="X-ray"/>
    <property type="resolution" value="2.70 A"/>
    <property type="chains" value="B/P=1-258"/>
</dbReference>
<dbReference type="PDB" id="4Y70">
    <property type="method" value="X-ray"/>
    <property type="resolution" value="2.40 A"/>
    <property type="chains" value="B/P=1-258"/>
</dbReference>
<dbReference type="PDB" id="4Y74">
    <property type="method" value="X-ray"/>
    <property type="resolution" value="2.70 A"/>
    <property type="chains" value="B/P=1-258"/>
</dbReference>
<dbReference type="PDB" id="4Y75">
    <property type="method" value="X-ray"/>
    <property type="resolution" value="2.80 A"/>
    <property type="chains" value="B/P=1-258"/>
</dbReference>
<dbReference type="PDB" id="4Y77">
    <property type="method" value="X-ray"/>
    <property type="resolution" value="2.50 A"/>
    <property type="chains" value="B/P=1-258"/>
</dbReference>
<dbReference type="PDB" id="4Y78">
    <property type="method" value="X-ray"/>
    <property type="resolution" value="2.80 A"/>
    <property type="chains" value="B/P=1-258"/>
</dbReference>
<dbReference type="PDB" id="4Y7W">
    <property type="method" value="X-ray"/>
    <property type="resolution" value="2.50 A"/>
    <property type="chains" value="B/P=1-258"/>
</dbReference>
<dbReference type="PDB" id="4Y7X">
    <property type="method" value="X-ray"/>
    <property type="resolution" value="2.60 A"/>
    <property type="chains" value="B/P=1-258"/>
</dbReference>
<dbReference type="PDB" id="4Y7Y">
    <property type="method" value="X-ray"/>
    <property type="resolution" value="2.40 A"/>
    <property type="chains" value="B/P=1-258"/>
</dbReference>
<dbReference type="PDB" id="4Y80">
    <property type="method" value="X-ray"/>
    <property type="resolution" value="2.50 A"/>
    <property type="chains" value="B/P=1-258"/>
</dbReference>
<dbReference type="PDB" id="4Y81">
    <property type="method" value="X-ray"/>
    <property type="resolution" value="2.80 A"/>
    <property type="chains" value="B/P=1-258"/>
</dbReference>
<dbReference type="PDB" id="4Y82">
    <property type="method" value="X-ray"/>
    <property type="resolution" value="2.80 A"/>
    <property type="chains" value="B/P=1-258"/>
</dbReference>
<dbReference type="PDB" id="4Y84">
    <property type="method" value="X-ray"/>
    <property type="resolution" value="2.70 A"/>
    <property type="chains" value="B/P=1-258"/>
</dbReference>
<dbReference type="PDB" id="4Y8G">
    <property type="method" value="X-ray"/>
    <property type="resolution" value="2.60 A"/>
    <property type="chains" value="B/P=1-258"/>
</dbReference>
<dbReference type="PDB" id="4Y8H">
    <property type="method" value="X-ray"/>
    <property type="resolution" value="2.50 A"/>
    <property type="chains" value="B/P=1-258"/>
</dbReference>
<dbReference type="PDB" id="4Y8I">
    <property type="method" value="X-ray"/>
    <property type="resolution" value="2.60 A"/>
    <property type="chains" value="B/P=1-258"/>
</dbReference>
<dbReference type="PDB" id="4Y8J">
    <property type="method" value="X-ray"/>
    <property type="resolution" value="2.70 A"/>
    <property type="chains" value="B/P=1-258"/>
</dbReference>
<dbReference type="PDB" id="4Y8K">
    <property type="method" value="X-ray"/>
    <property type="resolution" value="2.60 A"/>
    <property type="chains" value="B/P=1-258"/>
</dbReference>
<dbReference type="PDB" id="4Y8L">
    <property type="method" value="X-ray"/>
    <property type="resolution" value="2.40 A"/>
    <property type="chains" value="B/P=1-258"/>
</dbReference>
<dbReference type="PDB" id="4Y8M">
    <property type="method" value="X-ray"/>
    <property type="resolution" value="2.80 A"/>
    <property type="chains" value="B/P=1-258"/>
</dbReference>
<dbReference type="PDB" id="4Y8N">
    <property type="method" value="X-ray"/>
    <property type="resolution" value="2.60 A"/>
    <property type="chains" value="B/P=1-258"/>
</dbReference>
<dbReference type="PDB" id="4Y8O">
    <property type="method" value="X-ray"/>
    <property type="resolution" value="2.70 A"/>
    <property type="chains" value="B/P=1-258"/>
</dbReference>
<dbReference type="PDB" id="4Y8P">
    <property type="method" value="X-ray"/>
    <property type="resolution" value="2.80 A"/>
    <property type="chains" value="B/P=1-258"/>
</dbReference>
<dbReference type="PDB" id="4Y8Q">
    <property type="method" value="X-ray"/>
    <property type="resolution" value="2.60 A"/>
    <property type="chains" value="B/P=1-258"/>
</dbReference>
<dbReference type="PDB" id="4Y8R">
    <property type="method" value="X-ray"/>
    <property type="resolution" value="2.70 A"/>
    <property type="chains" value="B/P=1-258"/>
</dbReference>
<dbReference type="PDB" id="4Y8S">
    <property type="method" value="X-ray"/>
    <property type="resolution" value="2.70 A"/>
    <property type="chains" value="B/P=1-258"/>
</dbReference>
<dbReference type="PDB" id="4Y8T">
    <property type="method" value="X-ray"/>
    <property type="resolution" value="2.70 A"/>
    <property type="chains" value="B/P=1-258"/>
</dbReference>
<dbReference type="PDB" id="4Y8U">
    <property type="method" value="X-ray"/>
    <property type="resolution" value="2.90 A"/>
    <property type="chains" value="B/P=1-258"/>
</dbReference>
<dbReference type="PDB" id="4Y9Y">
    <property type="method" value="X-ray"/>
    <property type="resolution" value="2.80 A"/>
    <property type="chains" value="B/P=1-258"/>
</dbReference>
<dbReference type="PDB" id="4Y9Z">
    <property type="method" value="X-ray"/>
    <property type="resolution" value="2.80 A"/>
    <property type="chains" value="B/P=1-258"/>
</dbReference>
<dbReference type="PDB" id="4YA0">
    <property type="method" value="X-ray"/>
    <property type="resolution" value="2.80 A"/>
    <property type="chains" value="B/P=1-258"/>
</dbReference>
<dbReference type="PDB" id="4YA1">
    <property type="method" value="X-ray"/>
    <property type="resolution" value="2.90 A"/>
    <property type="chains" value="B/P=1-258"/>
</dbReference>
<dbReference type="PDB" id="4YA2">
    <property type="method" value="X-ray"/>
    <property type="resolution" value="2.70 A"/>
    <property type="chains" value="B/P=1-258"/>
</dbReference>
<dbReference type="PDB" id="4YA3">
    <property type="method" value="X-ray"/>
    <property type="resolution" value="2.70 A"/>
    <property type="chains" value="B/P=1-258"/>
</dbReference>
<dbReference type="PDB" id="4YA4">
    <property type="method" value="X-ray"/>
    <property type="resolution" value="2.90 A"/>
    <property type="chains" value="B/P=1-258"/>
</dbReference>
<dbReference type="PDB" id="4YA5">
    <property type="method" value="X-ray"/>
    <property type="resolution" value="2.50 A"/>
    <property type="chains" value="B/P=1-258"/>
</dbReference>
<dbReference type="PDB" id="4YA7">
    <property type="method" value="X-ray"/>
    <property type="resolution" value="2.70 A"/>
    <property type="chains" value="B/P=1-258"/>
</dbReference>
<dbReference type="PDB" id="4YA9">
    <property type="method" value="X-ray"/>
    <property type="resolution" value="2.70 A"/>
    <property type="chains" value="B/P=1-258"/>
</dbReference>
<dbReference type="PDB" id="4Z1L">
    <property type="method" value="X-ray"/>
    <property type="resolution" value="3.00 A"/>
    <property type="chains" value="B/P=1-258"/>
</dbReference>
<dbReference type="PDB" id="5A5B">
    <property type="method" value="EM"/>
    <property type="resolution" value="9.50 A"/>
    <property type="chains" value="C=1-258"/>
</dbReference>
<dbReference type="PDB" id="5AHJ">
    <property type="method" value="X-ray"/>
    <property type="resolution" value="2.80 A"/>
    <property type="chains" value="B/P=1-258"/>
</dbReference>
<dbReference type="PDB" id="5BOU">
    <property type="method" value="X-ray"/>
    <property type="resolution" value="2.60 A"/>
    <property type="chains" value="B/P=1-258"/>
</dbReference>
<dbReference type="PDB" id="5BXL">
    <property type="method" value="X-ray"/>
    <property type="resolution" value="2.80 A"/>
    <property type="chains" value="B/P=1-258"/>
</dbReference>
<dbReference type="PDB" id="5BXN">
    <property type="method" value="X-ray"/>
    <property type="resolution" value="2.80 A"/>
    <property type="chains" value="B/P=1-258"/>
</dbReference>
<dbReference type="PDB" id="5CGF">
    <property type="method" value="X-ray"/>
    <property type="resolution" value="2.80 A"/>
    <property type="chains" value="B/P=1-258"/>
</dbReference>
<dbReference type="PDB" id="5CGG">
    <property type="method" value="X-ray"/>
    <property type="resolution" value="2.90 A"/>
    <property type="chains" value="B/P=1-258"/>
</dbReference>
<dbReference type="PDB" id="5CGH">
    <property type="method" value="X-ray"/>
    <property type="resolution" value="2.50 A"/>
    <property type="chains" value="B/P=1-258"/>
</dbReference>
<dbReference type="PDB" id="5CGI">
    <property type="method" value="X-ray"/>
    <property type="resolution" value="2.80 A"/>
    <property type="chains" value="B/P=1-258"/>
</dbReference>
<dbReference type="PDB" id="5CZ4">
    <property type="method" value="X-ray"/>
    <property type="resolution" value="2.30 A"/>
    <property type="chains" value="B/P=1-258"/>
</dbReference>
<dbReference type="PDB" id="5CZ5">
    <property type="method" value="X-ray"/>
    <property type="resolution" value="2.80 A"/>
    <property type="chains" value="B/P=1-258"/>
</dbReference>
<dbReference type="PDB" id="5CZ6">
    <property type="method" value="X-ray"/>
    <property type="resolution" value="2.70 A"/>
    <property type="chains" value="B/P=1-258"/>
</dbReference>
<dbReference type="PDB" id="5CZ7">
    <property type="method" value="X-ray"/>
    <property type="resolution" value="2.50 A"/>
    <property type="chains" value="B/P=1-258"/>
</dbReference>
<dbReference type="PDB" id="5CZ8">
    <property type="method" value="X-ray"/>
    <property type="resolution" value="2.80 A"/>
    <property type="chains" value="B/P=1-258"/>
</dbReference>
<dbReference type="PDB" id="5CZ9">
    <property type="method" value="X-ray"/>
    <property type="resolution" value="2.90 A"/>
    <property type="chains" value="B/P=1-258"/>
</dbReference>
<dbReference type="PDB" id="5CZA">
    <property type="method" value="X-ray"/>
    <property type="resolution" value="2.50 A"/>
    <property type="chains" value="B/P=1-258"/>
</dbReference>
<dbReference type="PDB" id="5D0S">
    <property type="method" value="X-ray"/>
    <property type="resolution" value="2.50 A"/>
    <property type="chains" value="B/P=1-258"/>
</dbReference>
<dbReference type="PDB" id="5D0T">
    <property type="method" value="X-ray"/>
    <property type="resolution" value="2.60 A"/>
    <property type="chains" value="B/P=1-258"/>
</dbReference>
<dbReference type="PDB" id="5D0V">
    <property type="method" value="X-ray"/>
    <property type="resolution" value="2.90 A"/>
    <property type="chains" value="B/P=1-258"/>
</dbReference>
<dbReference type="PDB" id="5D0W">
    <property type="method" value="X-ray"/>
    <property type="resolution" value="2.80 A"/>
    <property type="chains" value="B/P=1-258"/>
</dbReference>
<dbReference type="PDB" id="5D0X">
    <property type="method" value="X-ray"/>
    <property type="resolution" value="2.60 A"/>
    <property type="chains" value="B/P=1-258"/>
</dbReference>
<dbReference type="PDB" id="5D0Z">
    <property type="method" value="X-ray"/>
    <property type="resolution" value="2.90 A"/>
    <property type="chains" value="B/P=1-258"/>
</dbReference>
<dbReference type="PDB" id="5DKI">
    <property type="method" value="X-ray"/>
    <property type="resolution" value="2.80 A"/>
    <property type="chains" value="B/P=1-258"/>
</dbReference>
<dbReference type="PDB" id="5DKJ">
    <property type="method" value="X-ray"/>
    <property type="resolution" value="2.80 A"/>
    <property type="chains" value="B/P=1-258"/>
</dbReference>
<dbReference type="PDB" id="5FG7">
    <property type="method" value="X-ray"/>
    <property type="resolution" value="2.70 A"/>
    <property type="chains" value="B/P=1-258"/>
</dbReference>
<dbReference type="PDB" id="5FG9">
    <property type="method" value="X-ray"/>
    <property type="resolution" value="2.60 A"/>
    <property type="chains" value="B/P=1-258"/>
</dbReference>
<dbReference type="PDB" id="5FGA">
    <property type="method" value="X-ray"/>
    <property type="resolution" value="2.70 A"/>
    <property type="chains" value="B/P=1-258"/>
</dbReference>
<dbReference type="PDB" id="5FGD">
    <property type="method" value="X-ray"/>
    <property type="resolution" value="2.80 A"/>
    <property type="chains" value="B/P=1-258"/>
</dbReference>
<dbReference type="PDB" id="5FGE">
    <property type="method" value="X-ray"/>
    <property type="resolution" value="2.60 A"/>
    <property type="chains" value="B/P=1-258"/>
</dbReference>
<dbReference type="PDB" id="5FGF">
    <property type="method" value="X-ray"/>
    <property type="resolution" value="2.60 A"/>
    <property type="chains" value="B/P=1-258"/>
</dbReference>
<dbReference type="PDB" id="5FGG">
    <property type="method" value="X-ray"/>
    <property type="resolution" value="2.70 A"/>
    <property type="chains" value="B/P=1-258"/>
</dbReference>
<dbReference type="PDB" id="5FGH">
    <property type="method" value="X-ray"/>
    <property type="resolution" value="2.80 A"/>
    <property type="chains" value="B/P=1-258"/>
</dbReference>
<dbReference type="PDB" id="5FGI">
    <property type="method" value="X-ray"/>
    <property type="resolution" value="2.90 A"/>
    <property type="chains" value="B/P=1-258"/>
</dbReference>
<dbReference type="PDB" id="5FHS">
    <property type="method" value="X-ray"/>
    <property type="resolution" value="2.70 A"/>
    <property type="chains" value="B/P=1-258"/>
</dbReference>
<dbReference type="PDB" id="5JHR">
    <property type="method" value="X-ray"/>
    <property type="resolution" value="2.90 A"/>
    <property type="chains" value="B/P=1-258"/>
</dbReference>
<dbReference type="PDB" id="5JHS">
    <property type="method" value="X-ray"/>
    <property type="resolution" value="3.00 A"/>
    <property type="chains" value="B/P=1-258"/>
</dbReference>
<dbReference type="PDB" id="5L52">
    <property type="method" value="X-ray"/>
    <property type="resolution" value="2.70 A"/>
    <property type="chains" value="B/P=1-258"/>
</dbReference>
<dbReference type="PDB" id="5L54">
    <property type="method" value="X-ray"/>
    <property type="resolution" value="2.80 A"/>
    <property type="chains" value="B/P=1-258"/>
</dbReference>
<dbReference type="PDB" id="5L55">
    <property type="method" value="X-ray"/>
    <property type="resolution" value="2.90 A"/>
    <property type="chains" value="B/P=1-258"/>
</dbReference>
<dbReference type="PDB" id="5L5A">
    <property type="method" value="X-ray"/>
    <property type="resolution" value="2.40 A"/>
    <property type="chains" value="B/P=1-258"/>
</dbReference>
<dbReference type="PDB" id="5L5B">
    <property type="method" value="X-ray"/>
    <property type="resolution" value="2.80 A"/>
    <property type="chains" value="B/P=1-258"/>
</dbReference>
<dbReference type="PDB" id="5L5D">
    <property type="method" value="X-ray"/>
    <property type="resolution" value="2.80 A"/>
    <property type="chains" value="B/P=1-258"/>
</dbReference>
<dbReference type="PDB" id="5L5E">
    <property type="method" value="X-ray"/>
    <property type="resolution" value="2.90 A"/>
    <property type="chains" value="B/P=1-258"/>
</dbReference>
<dbReference type="PDB" id="5L5F">
    <property type="method" value="X-ray"/>
    <property type="resolution" value="2.50 A"/>
    <property type="chains" value="B/P=1-258"/>
</dbReference>
<dbReference type="PDB" id="5L5H">
    <property type="method" value="X-ray"/>
    <property type="resolution" value="2.60 A"/>
    <property type="chains" value="B/P=1-258"/>
</dbReference>
<dbReference type="PDB" id="5L5I">
    <property type="method" value="X-ray"/>
    <property type="resolution" value="2.90 A"/>
    <property type="chains" value="B/P=1-258"/>
</dbReference>
<dbReference type="PDB" id="5L5J">
    <property type="method" value="X-ray"/>
    <property type="resolution" value="2.90 A"/>
    <property type="chains" value="B/P=1-258"/>
</dbReference>
<dbReference type="PDB" id="5L5O">
    <property type="method" value="X-ray"/>
    <property type="resolution" value="2.60 A"/>
    <property type="chains" value="B/P=1-258"/>
</dbReference>
<dbReference type="PDB" id="5L5P">
    <property type="method" value="X-ray"/>
    <property type="resolution" value="2.80 A"/>
    <property type="chains" value="B/P=1-258"/>
</dbReference>
<dbReference type="PDB" id="5L5Q">
    <property type="method" value="X-ray"/>
    <property type="resolution" value="2.80 A"/>
    <property type="chains" value="B/P=1-258"/>
</dbReference>
<dbReference type="PDB" id="5L5R">
    <property type="method" value="X-ray"/>
    <property type="resolution" value="2.90 A"/>
    <property type="chains" value="B/P=1-258"/>
</dbReference>
<dbReference type="PDB" id="5L5S">
    <property type="method" value="X-ray"/>
    <property type="resolution" value="2.60 A"/>
    <property type="chains" value="B/P=1-258"/>
</dbReference>
<dbReference type="PDB" id="5L5T">
    <property type="method" value="X-ray"/>
    <property type="resolution" value="2.90 A"/>
    <property type="chains" value="B/P=1-258"/>
</dbReference>
<dbReference type="PDB" id="5L5U">
    <property type="method" value="X-ray"/>
    <property type="resolution" value="2.60 A"/>
    <property type="chains" value="B/P=1-258"/>
</dbReference>
<dbReference type="PDB" id="5L5V">
    <property type="method" value="X-ray"/>
    <property type="resolution" value="2.70 A"/>
    <property type="chains" value="B/P=1-258"/>
</dbReference>
<dbReference type="PDB" id="5L5W">
    <property type="method" value="X-ray"/>
    <property type="resolution" value="2.80 A"/>
    <property type="chains" value="B/P=1-258"/>
</dbReference>
<dbReference type="PDB" id="5L5X">
    <property type="method" value="X-ray"/>
    <property type="resolution" value="2.90 A"/>
    <property type="chains" value="B/P=1-258"/>
</dbReference>
<dbReference type="PDB" id="5L5Y">
    <property type="method" value="X-ray"/>
    <property type="resolution" value="2.70 A"/>
    <property type="chains" value="B/P=1-258"/>
</dbReference>
<dbReference type="PDB" id="5L5Z">
    <property type="method" value="X-ray"/>
    <property type="resolution" value="2.70 A"/>
    <property type="chains" value="B/P=1-258"/>
</dbReference>
<dbReference type="PDB" id="5L60">
    <property type="method" value="X-ray"/>
    <property type="resolution" value="2.70 A"/>
    <property type="chains" value="B/P=1-258"/>
</dbReference>
<dbReference type="PDB" id="5L61">
    <property type="method" value="X-ray"/>
    <property type="resolution" value="2.80 A"/>
    <property type="chains" value="B/P=1-258"/>
</dbReference>
<dbReference type="PDB" id="5L62">
    <property type="method" value="X-ray"/>
    <property type="resolution" value="2.80 A"/>
    <property type="chains" value="B/P=1-258"/>
</dbReference>
<dbReference type="PDB" id="5L63">
    <property type="method" value="X-ray"/>
    <property type="resolution" value="2.70 A"/>
    <property type="chains" value="B/P=1-258"/>
</dbReference>
<dbReference type="PDB" id="5L64">
    <property type="method" value="X-ray"/>
    <property type="resolution" value="2.70 A"/>
    <property type="chains" value="B/P=1-258"/>
</dbReference>
<dbReference type="PDB" id="5L65">
    <property type="method" value="X-ray"/>
    <property type="resolution" value="2.90 A"/>
    <property type="chains" value="B/P=1-258"/>
</dbReference>
<dbReference type="PDB" id="5L66">
    <property type="method" value="X-ray"/>
    <property type="resolution" value="2.80 A"/>
    <property type="chains" value="B/P=1-258"/>
</dbReference>
<dbReference type="PDB" id="5L67">
    <property type="method" value="X-ray"/>
    <property type="resolution" value="2.60 A"/>
    <property type="chains" value="B/P=1-258"/>
</dbReference>
<dbReference type="PDB" id="5L68">
    <property type="method" value="X-ray"/>
    <property type="resolution" value="2.80 A"/>
    <property type="chains" value="B/P=1-258"/>
</dbReference>
<dbReference type="PDB" id="5L69">
    <property type="method" value="X-ray"/>
    <property type="resolution" value="2.70 A"/>
    <property type="chains" value="B/P=1-258"/>
</dbReference>
<dbReference type="PDB" id="5L6A">
    <property type="method" value="X-ray"/>
    <property type="resolution" value="2.80 A"/>
    <property type="chains" value="B/P=1-258"/>
</dbReference>
<dbReference type="PDB" id="5L6B">
    <property type="method" value="X-ray"/>
    <property type="resolution" value="2.60 A"/>
    <property type="chains" value="B/P=1-258"/>
</dbReference>
<dbReference type="PDB" id="5L6C">
    <property type="method" value="X-ray"/>
    <property type="resolution" value="2.60 A"/>
    <property type="chains" value="B/P=1-258"/>
</dbReference>
<dbReference type="PDB" id="5LAI">
    <property type="method" value="X-ray"/>
    <property type="resolution" value="2.50 A"/>
    <property type="chains" value="B/P=1-258"/>
</dbReference>
<dbReference type="PDB" id="5LAJ">
    <property type="method" value="X-ray"/>
    <property type="resolution" value="2.90 A"/>
    <property type="chains" value="B/P=1-258"/>
</dbReference>
<dbReference type="PDB" id="5LTT">
    <property type="method" value="X-ray"/>
    <property type="resolution" value="2.70 A"/>
    <property type="chains" value="B/P=1-258"/>
</dbReference>
<dbReference type="PDB" id="5M2B">
    <property type="method" value="X-ray"/>
    <property type="resolution" value="2.70 A"/>
    <property type="chains" value="B/P=1-258"/>
</dbReference>
<dbReference type="PDB" id="5MP9">
    <property type="method" value="EM"/>
    <property type="resolution" value="4.10 A"/>
    <property type="chains" value="C/c=1-258"/>
</dbReference>
<dbReference type="PDB" id="5MPA">
    <property type="method" value="EM"/>
    <property type="resolution" value="4.50 A"/>
    <property type="chains" value="C/c=1-258"/>
</dbReference>
<dbReference type="PDB" id="5MPB">
    <property type="method" value="EM"/>
    <property type="resolution" value="7.80 A"/>
    <property type="chains" value="C/c=1-258"/>
</dbReference>
<dbReference type="PDB" id="5MPC">
    <property type="method" value="EM"/>
    <property type="resolution" value="7.70 A"/>
    <property type="chains" value="C/c=1-258"/>
</dbReference>
<dbReference type="PDB" id="5NIF">
    <property type="method" value="X-ray"/>
    <property type="resolution" value="3.00 A"/>
    <property type="chains" value="C/Q=1-258"/>
</dbReference>
<dbReference type="PDB" id="5WVI">
    <property type="method" value="EM"/>
    <property type="resolution" value="6.30 A"/>
    <property type="chains" value="C/d=1-258"/>
</dbReference>
<dbReference type="PDB" id="5WVK">
    <property type="method" value="EM"/>
    <property type="resolution" value="4.20 A"/>
    <property type="chains" value="C/d=1-258"/>
</dbReference>
<dbReference type="PDB" id="6EF0">
    <property type="method" value="EM"/>
    <property type="resolution" value="4.43 A"/>
    <property type="chains" value="C=1-244"/>
</dbReference>
<dbReference type="PDB" id="6EF1">
    <property type="method" value="EM"/>
    <property type="resolution" value="4.73 A"/>
    <property type="chains" value="C=8-245"/>
</dbReference>
<dbReference type="PDB" id="6EF2">
    <property type="method" value="EM"/>
    <property type="resolution" value="4.27 A"/>
    <property type="chains" value="C=4-244"/>
</dbReference>
<dbReference type="PDB" id="6EF3">
    <property type="method" value="EM"/>
    <property type="resolution" value="4.17 A"/>
    <property type="chains" value="C=1-258"/>
</dbReference>
<dbReference type="PDB" id="6FVT">
    <property type="method" value="EM"/>
    <property type="resolution" value="4.10 A"/>
    <property type="chains" value="C/c=2-245"/>
</dbReference>
<dbReference type="PDB" id="6FVU">
    <property type="method" value="EM"/>
    <property type="resolution" value="4.50 A"/>
    <property type="chains" value="C/c=2-245"/>
</dbReference>
<dbReference type="PDB" id="6FVV">
    <property type="method" value="EM"/>
    <property type="resolution" value="5.40 A"/>
    <property type="chains" value="C/c=2-245"/>
</dbReference>
<dbReference type="PDB" id="6FVW">
    <property type="method" value="EM"/>
    <property type="resolution" value="4.50 A"/>
    <property type="chains" value="C/c=5-245"/>
</dbReference>
<dbReference type="PDB" id="6FVX">
    <property type="method" value="EM"/>
    <property type="resolution" value="4.90 A"/>
    <property type="chains" value="C/c=5-245"/>
</dbReference>
<dbReference type="PDB" id="6FVY">
    <property type="method" value="EM"/>
    <property type="resolution" value="6.10 A"/>
    <property type="chains" value="C/c=5-245"/>
</dbReference>
<dbReference type="PDB" id="6G7F">
    <property type="method" value="X-ray"/>
    <property type="resolution" value="2.70 A"/>
    <property type="chains" value="B/P=1-258"/>
</dbReference>
<dbReference type="PDB" id="6G8M">
    <property type="method" value="X-ray"/>
    <property type="resolution" value="2.70 A"/>
    <property type="chains" value="B/P=1-258"/>
</dbReference>
<dbReference type="PDB" id="6G8N">
    <property type="method" value="X-ray"/>
    <property type="resolution" value="3.00 A"/>
    <property type="chains" value="B/P=1-258"/>
</dbReference>
<dbReference type="PDB" id="6GOP">
    <property type="method" value="X-ray"/>
    <property type="resolution" value="2.90 A"/>
    <property type="chains" value="B/P=1-258"/>
</dbReference>
<dbReference type="PDB" id="6H39">
    <property type="method" value="X-ray"/>
    <property type="resolution" value="2.50 A"/>
    <property type="chains" value="B/P=1-258"/>
</dbReference>
<dbReference type="PDB" id="6HTB">
    <property type="method" value="X-ray"/>
    <property type="resolution" value="2.70 A"/>
    <property type="chains" value="B/P=1-258"/>
</dbReference>
<dbReference type="PDB" id="6HTC">
    <property type="method" value="X-ray"/>
    <property type="resolution" value="2.80 A"/>
    <property type="chains" value="B/P=1-258"/>
</dbReference>
<dbReference type="PDB" id="6HTD">
    <property type="method" value="X-ray"/>
    <property type="resolution" value="3.00 A"/>
    <property type="chains" value="B/P=1-258"/>
</dbReference>
<dbReference type="PDB" id="6HTP">
    <property type="method" value="X-ray"/>
    <property type="resolution" value="3.00 A"/>
    <property type="chains" value="B/P=1-258"/>
</dbReference>
<dbReference type="PDB" id="6HTR">
    <property type="method" value="X-ray"/>
    <property type="resolution" value="2.60 A"/>
    <property type="chains" value="B/P=1-258"/>
</dbReference>
<dbReference type="PDB" id="6HUB">
    <property type="method" value="X-ray"/>
    <property type="resolution" value="2.90 A"/>
    <property type="chains" value="B/P=1-258"/>
</dbReference>
<dbReference type="PDB" id="6HUC">
    <property type="method" value="X-ray"/>
    <property type="resolution" value="3.00 A"/>
    <property type="chains" value="B/P=1-258"/>
</dbReference>
<dbReference type="PDB" id="6HUQ">
    <property type="method" value="X-ray"/>
    <property type="resolution" value="3.00 A"/>
    <property type="chains" value="B/P=1-258"/>
</dbReference>
<dbReference type="PDB" id="6HUU">
    <property type="method" value="X-ray"/>
    <property type="resolution" value="2.80 A"/>
    <property type="chains" value="B/P=1-258"/>
</dbReference>
<dbReference type="PDB" id="6HUV">
    <property type="method" value="X-ray"/>
    <property type="resolution" value="3.10 A"/>
    <property type="chains" value="B/P=1-258"/>
</dbReference>
<dbReference type="PDB" id="6HV3">
    <property type="method" value="X-ray"/>
    <property type="resolution" value="2.70 A"/>
    <property type="chains" value="B/P=1-258"/>
</dbReference>
<dbReference type="PDB" id="6HV4">
    <property type="method" value="X-ray"/>
    <property type="resolution" value="3.00 A"/>
    <property type="chains" value="B/P=1-258"/>
</dbReference>
<dbReference type="PDB" id="6HV5">
    <property type="method" value="X-ray"/>
    <property type="resolution" value="3.00 A"/>
    <property type="chains" value="B/P=1-258"/>
</dbReference>
<dbReference type="PDB" id="6HV7">
    <property type="method" value="X-ray"/>
    <property type="resolution" value="3.40 A"/>
    <property type="chains" value="B/P=1-258"/>
</dbReference>
<dbReference type="PDB" id="6HVA">
    <property type="method" value="X-ray"/>
    <property type="resolution" value="2.90 A"/>
    <property type="chains" value="B/P=1-258"/>
</dbReference>
<dbReference type="PDB" id="6HVR">
    <property type="method" value="X-ray"/>
    <property type="resolution" value="2.70 A"/>
    <property type="chains" value="B/P=1-258"/>
</dbReference>
<dbReference type="PDB" id="6HVS">
    <property type="method" value="X-ray"/>
    <property type="resolution" value="3.10 A"/>
    <property type="chains" value="B/P=1-258"/>
</dbReference>
<dbReference type="PDB" id="6HVT">
    <property type="method" value="X-ray"/>
    <property type="resolution" value="2.90 A"/>
    <property type="chains" value="B/P=1-258"/>
</dbReference>
<dbReference type="PDB" id="6HVU">
    <property type="method" value="X-ray"/>
    <property type="resolution" value="2.90 A"/>
    <property type="chains" value="B/P=1-258"/>
</dbReference>
<dbReference type="PDB" id="6HVV">
    <property type="method" value="X-ray"/>
    <property type="resolution" value="2.70 A"/>
    <property type="chains" value="B/P=1-258"/>
</dbReference>
<dbReference type="PDB" id="6HVW">
    <property type="method" value="X-ray"/>
    <property type="resolution" value="3.00 A"/>
    <property type="chains" value="B/P=1-258"/>
</dbReference>
<dbReference type="PDB" id="6HVX">
    <property type="method" value="X-ray"/>
    <property type="resolution" value="2.80 A"/>
    <property type="chains" value="B/P=1-258"/>
</dbReference>
<dbReference type="PDB" id="6HVY">
    <property type="method" value="X-ray"/>
    <property type="resolution" value="2.70 A"/>
    <property type="chains" value="B/P=1-258"/>
</dbReference>
<dbReference type="PDB" id="6HW0">
    <property type="method" value="X-ray"/>
    <property type="resolution" value="2.80 A"/>
    <property type="chains" value="B/P=1-258"/>
</dbReference>
<dbReference type="PDB" id="6HW3">
    <property type="method" value="X-ray"/>
    <property type="resolution" value="2.60 A"/>
    <property type="chains" value="B/P=1-258"/>
</dbReference>
<dbReference type="PDB" id="6HW4">
    <property type="method" value="X-ray"/>
    <property type="resolution" value="2.90 A"/>
    <property type="chains" value="B/P=1-258"/>
</dbReference>
<dbReference type="PDB" id="6HW5">
    <property type="method" value="X-ray"/>
    <property type="resolution" value="2.90 A"/>
    <property type="chains" value="B/P=1-258"/>
</dbReference>
<dbReference type="PDB" id="6HW6">
    <property type="method" value="X-ray"/>
    <property type="resolution" value="2.70 A"/>
    <property type="chains" value="B/P=1-258"/>
</dbReference>
<dbReference type="PDB" id="6HW7">
    <property type="method" value="X-ray"/>
    <property type="resolution" value="2.70 A"/>
    <property type="chains" value="B/P=1-258"/>
</dbReference>
<dbReference type="PDB" id="6HW8">
    <property type="method" value="X-ray"/>
    <property type="resolution" value="2.80 A"/>
    <property type="chains" value="B/P=1-258"/>
</dbReference>
<dbReference type="PDB" id="6HW9">
    <property type="method" value="X-ray"/>
    <property type="resolution" value="2.80 A"/>
    <property type="chains" value="B/P=1-258"/>
</dbReference>
<dbReference type="PDB" id="6HWA">
    <property type="method" value="X-ray"/>
    <property type="resolution" value="2.80 A"/>
    <property type="chains" value="B/P=1-258"/>
</dbReference>
<dbReference type="PDB" id="6HWB">
    <property type="method" value="X-ray"/>
    <property type="resolution" value="2.60 A"/>
    <property type="chains" value="B/P=1-258"/>
</dbReference>
<dbReference type="PDB" id="6HWC">
    <property type="method" value="X-ray"/>
    <property type="resolution" value="2.80 A"/>
    <property type="chains" value="B/P=1-258"/>
</dbReference>
<dbReference type="PDB" id="6HWD">
    <property type="method" value="X-ray"/>
    <property type="resolution" value="2.80 A"/>
    <property type="chains" value="B/P=1-258"/>
</dbReference>
<dbReference type="PDB" id="6HWE">
    <property type="method" value="X-ray"/>
    <property type="resolution" value="2.30 A"/>
    <property type="chains" value="B/P=1-258"/>
</dbReference>
<dbReference type="PDB" id="6HWF">
    <property type="method" value="X-ray"/>
    <property type="resolution" value="2.50 A"/>
    <property type="chains" value="B/P=1-258"/>
</dbReference>
<dbReference type="PDB" id="6J2C">
    <property type="method" value="EM"/>
    <property type="resolution" value="7.00 A"/>
    <property type="chains" value="C/d=1-258"/>
</dbReference>
<dbReference type="PDB" id="6J2N">
    <property type="method" value="EM"/>
    <property type="resolution" value="7.50 A"/>
    <property type="chains" value="C/d=1-258"/>
</dbReference>
<dbReference type="PDB" id="6J2Q">
    <property type="method" value="EM"/>
    <property type="resolution" value="3.80 A"/>
    <property type="chains" value="C/d=1-258"/>
</dbReference>
<dbReference type="PDB" id="6J2X">
    <property type="method" value="EM"/>
    <property type="resolution" value="3.80 A"/>
    <property type="chains" value="C/d=1-258"/>
</dbReference>
<dbReference type="PDB" id="6J30">
    <property type="method" value="EM"/>
    <property type="resolution" value="4.50 A"/>
    <property type="chains" value="C/d=1-258"/>
</dbReference>
<dbReference type="PDB" id="6ZOU">
    <property type="method" value="X-ray"/>
    <property type="resolution" value="2.90 A"/>
    <property type="chains" value="B/P=1-258"/>
</dbReference>
<dbReference type="PDB" id="6ZP6">
    <property type="method" value="X-ray"/>
    <property type="resolution" value="2.80 A"/>
    <property type="chains" value="B/P=1-258"/>
</dbReference>
<dbReference type="PDB" id="6ZP8">
    <property type="method" value="X-ray"/>
    <property type="resolution" value="3.00 A"/>
    <property type="chains" value="B/P=1-258"/>
</dbReference>
<dbReference type="PDB" id="7LS5">
    <property type="method" value="EM"/>
    <property type="resolution" value="2.74 A"/>
    <property type="chains" value="C/Q=1-258"/>
</dbReference>
<dbReference type="PDB" id="7LS6">
    <property type="method" value="EM"/>
    <property type="resolution" value="3.17 A"/>
    <property type="chains" value="C=1-258"/>
</dbReference>
<dbReference type="PDB" id="7LSX">
    <property type="method" value="EM"/>
    <property type="resolution" value="3.61 A"/>
    <property type="chains" value="C=1-258"/>
</dbReference>
<dbReference type="PDB" id="7O2L">
    <property type="method" value="X-ray"/>
    <property type="resolution" value="3.00 A"/>
    <property type="chains" value="B/P=1-258"/>
</dbReference>
<dbReference type="PDB" id="7QO3">
    <property type="method" value="EM"/>
    <property type="resolution" value="6.10 A"/>
    <property type="chains" value="C/c=1-258"/>
</dbReference>
<dbReference type="PDB" id="7QO5">
    <property type="method" value="EM"/>
    <property type="resolution" value="6.00 A"/>
    <property type="chains" value="C/c=1-258"/>
</dbReference>
<dbReference type="PDB" id="8BW1">
    <property type="method" value="X-ray"/>
    <property type="resolution" value="3.25 A"/>
    <property type="chains" value="B/P=1-258"/>
</dbReference>
<dbReference type="PDB" id="8OHZ">
    <property type="method" value="X-ray"/>
    <property type="resolution" value="2.65 A"/>
    <property type="chains" value="B/P=1-258"/>
</dbReference>
<dbReference type="PDB" id="8OI1">
    <property type="method" value="X-ray"/>
    <property type="resolution" value="2.95 A"/>
    <property type="chains" value="B/P=1-258"/>
</dbReference>
<dbReference type="PDB" id="8OLR">
    <property type="method" value="X-ray"/>
    <property type="resolution" value="2.80 A"/>
    <property type="chains" value="B/P=1-258"/>
</dbReference>
<dbReference type="PDB" id="8RHJ">
    <property type="method" value="X-ray"/>
    <property type="resolution" value="3.05 A"/>
    <property type="chains" value="B/P=1-258"/>
</dbReference>
<dbReference type="PDB" id="8RHK">
    <property type="method" value="X-ray"/>
    <property type="resolution" value="2.80 A"/>
    <property type="chains" value="B/P=1-258"/>
</dbReference>
<dbReference type="PDB" id="8RHL">
    <property type="method" value="X-ray"/>
    <property type="resolution" value="3.20 A"/>
    <property type="chains" value="B/P=1-258"/>
</dbReference>
<dbReference type="PDB" id="8RVL">
    <property type="method" value="EM"/>
    <property type="resolution" value="2.14 A"/>
    <property type="chains" value="C/Q=1-258"/>
</dbReference>
<dbReference type="PDB" id="8RVO">
    <property type="method" value="EM"/>
    <property type="resolution" value="2.69 A"/>
    <property type="chains" value="C/Q=1-258"/>
</dbReference>
<dbReference type="PDB" id="8RVP">
    <property type="method" value="EM"/>
    <property type="resolution" value="2.28 A"/>
    <property type="chains" value="C/Q=1-258"/>
</dbReference>
<dbReference type="PDB" id="8RVQ">
    <property type="method" value="EM"/>
    <property type="resolution" value="2.02 A"/>
    <property type="chains" value="C/Q=1-258"/>
</dbReference>
<dbReference type="PDB" id="8T08">
    <property type="method" value="EM"/>
    <property type="resolution" value="3.00 A"/>
    <property type="chains" value="C/T=1-258"/>
</dbReference>
<dbReference type="PDB" id="8T0M">
    <property type="method" value="EM"/>
    <property type="resolution" value="2.40 A"/>
    <property type="chains" value="C/Q=1-258"/>
</dbReference>
<dbReference type="PDB" id="8U6Y">
    <property type="method" value="EM"/>
    <property type="resolution" value="2.80 A"/>
    <property type="chains" value="C/T=1-245"/>
</dbReference>
<dbReference type="PDB" id="8U7U">
    <property type="method" value="EM"/>
    <property type="resolution" value="2.16 A"/>
    <property type="chains" value="C/Q=1-258"/>
</dbReference>
<dbReference type="PDB" id="9D0T">
    <property type="method" value="EM"/>
    <property type="resolution" value="2.84 A"/>
    <property type="chains" value="C=1-258"/>
</dbReference>
<dbReference type="PDB" id="9EY9">
    <property type="method" value="X-ray"/>
    <property type="resolution" value="3.10 A"/>
    <property type="chains" value="B/P=1-258"/>
</dbReference>
<dbReference type="PDB" id="9FST">
    <property type="method" value="X-ray"/>
    <property type="resolution" value="2.75 A"/>
    <property type="chains" value="B/P=1-258"/>
</dbReference>
<dbReference type="PDB" id="9FSV">
    <property type="method" value="X-ray"/>
    <property type="resolution" value="2.75 A"/>
    <property type="chains" value="B/P=1-258"/>
</dbReference>
<dbReference type="PDB" id="9FT0">
    <property type="method" value="X-ray"/>
    <property type="resolution" value="2.75 A"/>
    <property type="chains" value="B/P=1-258"/>
</dbReference>
<dbReference type="PDB" id="9FT1">
    <property type="method" value="X-ray"/>
    <property type="resolution" value="2.60 A"/>
    <property type="chains" value="B/P=1-258"/>
</dbReference>
<dbReference type="PDB" id="9GBK">
    <property type="method" value="EM"/>
    <property type="resolution" value="2.39 A"/>
    <property type="chains" value="C/Q=1-258"/>
</dbReference>
<dbReference type="PDBsum" id="1FNT"/>
<dbReference type="PDBsum" id="1G0U"/>
<dbReference type="PDBsum" id="1G65"/>
<dbReference type="PDBsum" id="1JD2"/>
<dbReference type="PDBsum" id="1RYP"/>
<dbReference type="PDBsum" id="1Z7Q"/>
<dbReference type="PDBsum" id="2F16"/>
<dbReference type="PDBsum" id="2FAK"/>
<dbReference type="PDBsum" id="2GPL"/>
<dbReference type="PDBsum" id="2ZCY"/>
<dbReference type="PDBsum" id="3BDM"/>
<dbReference type="PDBsum" id="3D29"/>
<dbReference type="PDBsum" id="3DY3"/>
<dbReference type="PDBsum" id="3DY4"/>
<dbReference type="PDBsum" id="3E47"/>
<dbReference type="PDBsum" id="3GPJ"/>
<dbReference type="PDBsum" id="3GPT"/>
<dbReference type="PDBsum" id="3GPW"/>
<dbReference type="PDBsum" id="3HYE"/>
<dbReference type="PDBsum" id="3JCO"/>
<dbReference type="PDBsum" id="3JCP"/>
<dbReference type="PDBsum" id="3MG0"/>
<dbReference type="PDBsum" id="3MG4"/>
<dbReference type="PDBsum" id="3MG6"/>
<dbReference type="PDBsum" id="3MG7"/>
<dbReference type="PDBsum" id="3MG8"/>
<dbReference type="PDBsum" id="3NZJ"/>
<dbReference type="PDBsum" id="3NZW"/>
<dbReference type="PDBsum" id="3NZX"/>
<dbReference type="PDBsum" id="3OEU"/>
<dbReference type="PDBsum" id="3OEV"/>
<dbReference type="PDBsum" id="3OKJ"/>
<dbReference type="PDBsum" id="3SDI"/>
<dbReference type="PDBsum" id="3SDK"/>
<dbReference type="PDBsum" id="3SHJ"/>
<dbReference type="PDBsum" id="3TDD"/>
<dbReference type="PDBsum" id="3UN4"/>
<dbReference type="PDBsum" id="3UN8"/>
<dbReference type="PDBsum" id="3WXR"/>
<dbReference type="PDBsum" id="4CR2"/>
<dbReference type="PDBsum" id="4CR3"/>
<dbReference type="PDBsum" id="4CR4"/>
<dbReference type="PDBsum" id="4EU2"/>
<dbReference type="PDBsum" id="4FZC"/>
<dbReference type="PDBsum" id="4FZG"/>
<dbReference type="PDBsum" id="4G4S"/>
<dbReference type="PDBsum" id="4GK7"/>
<dbReference type="PDBsum" id="4HNP"/>
<dbReference type="PDBsum" id="4HRC"/>
<dbReference type="PDBsum" id="4HRD"/>
<dbReference type="PDBsum" id="4INR"/>
<dbReference type="PDBsum" id="4INT"/>
<dbReference type="PDBsum" id="4INU"/>
<dbReference type="PDBsum" id="4J70"/>
<dbReference type="PDBsum" id="4JSQ"/>
<dbReference type="PDBsum" id="4JSU"/>
<dbReference type="PDBsum" id="4JT0"/>
<dbReference type="PDBsum" id="4LQI"/>
<dbReference type="PDBsum" id="4LTC"/>
<dbReference type="PDBsum" id="4NNN"/>
<dbReference type="PDBsum" id="4NNW"/>
<dbReference type="PDBsum" id="4NO1"/>
<dbReference type="PDBsum" id="4NO6"/>
<dbReference type="PDBsum" id="4NO8"/>
<dbReference type="PDBsum" id="4NO9"/>
<dbReference type="PDBsum" id="4Q1S"/>
<dbReference type="PDBsum" id="4QBY"/>
<dbReference type="PDBsum" id="4QLQ"/>
<dbReference type="PDBsum" id="4QLS"/>
<dbReference type="PDBsum" id="4QLT"/>
<dbReference type="PDBsum" id="4QLU"/>
<dbReference type="PDBsum" id="4QLV"/>
<dbReference type="PDBsum" id="4QUX"/>
<dbReference type="PDBsum" id="4QUY"/>
<dbReference type="PDBsum" id="4QV0"/>
<dbReference type="PDBsum" id="4QV1"/>
<dbReference type="PDBsum" id="4QV3"/>
<dbReference type="PDBsum" id="4QV4"/>
<dbReference type="PDBsum" id="4QV5"/>
<dbReference type="PDBsum" id="4QV6"/>
<dbReference type="PDBsum" id="4QV7"/>
<dbReference type="PDBsum" id="4QV8"/>
<dbReference type="PDBsum" id="4QV9"/>
<dbReference type="PDBsum" id="4QVL"/>
<dbReference type="PDBsum" id="4QVM"/>
<dbReference type="PDBsum" id="4QVN"/>
<dbReference type="PDBsum" id="4QVP"/>
<dbReference type="PDBsum" id="4QVQ"/>
<dbReference type="PDBsum" id="4QVV"/>
<dbReference type="PDBsum" id="4QVW"/>
<dbReference type="PDBsum" id="4QVY"/>
<dbReference type="PDBsum" id="4QW0"/>
<dbReference type="PDBsum" id="4QW1"/>
<dbReference type="PDBsum" id="4QW3"/>
<dbReference type="PDBsum" id="4QW4"/>
<dbReference type="PDBsum" id="4QW5"/>
<dbReference type="PDBsum" id="4QW6"/>
<dbReference type="PDBsum" id="4QW7"/>
<dbReference type="PDBsum" id="4QWF"/>
<dbReference type="PDBsum" id="4QWG"/>
<dbReference type="PDBsum" id="4QWI"/>
<dbReference type="PDBsum" id="4QWJ"/>
<dbReference type="PDBsum" id="4QWK"/>
<dbReference type="PDBsum" id="4QWL"/>
<dbReference type="PDBsum" id="4QWR"/>
<dbReference type="PDBsum" id="4QWS"/>
<dbReference type="PDBsum" id="4QWU"/>
<dbReference type="PDBsum" id="4QWX"/>
<dbReference type="PDBsum" id="4QXJ"/>
<dbReference type="PDBsum" id="4QZ0"/>
<dbReference type="PDBsum" id="4QZ1"/>
<dbReference type="PDBsum" id="4QZ2"/>
<dbReference type="PDBsum" id="4QZ3"/>
<dbReference type="PDBsum" id="4QZ4"/>
<dbReference type="PDBsum" id="4QZ5"/>
<dbReference type="PDBsum" id="4QZ6"/>
<dbReference type="PDBsum" id="4QZ7"/>
<dbReference type="PDBsum" id="4QZW"/>
<dbReference type="PDBsum" id="4QZX"/>
<dbReference type="PDBsum" id="4QZZ"/>
<dbReference type="PDBsum" id="4R00"/>
<dbReference type="PDBsum" id="4R02"/>
<dbReference type="PDBsum" id="4R17"/>
<dbReference type="PDBsum" id="4R18"/>
<dbReference type="PDBsum" id="4RUR"/>
<dbReference type="PDBsum" id="4V7O"/>
<dbReference type="PDBsum" id="4X6Z"/>
<dbReference type="PDBsum" id="4Y69"/>
<dbReference type="PDBsum" id="4Y6A"/>
<dbReference type="PDBsum" id="4Y6V"/>
<dbReference type="PDBsum" id="4Y6Z"/>
<dbReference type="PDBsum" id="4Y70"/>
<dbReference type="PDBsum" id="4Y74"/>
<dbReference type="PDBsum" id="4Y75"/>
<dbReference type="PDBsum" id="4Y77"/>
<dbReference type="PDBsum" id="4Y78"/>
<dbReference type="PDBsum" id="4Y7W"/>
<dbReference type="PDBsum" id="4Y7X"/>
<dbReference type="PDBsum" id="4Y7Y"/>
<dbReference type="PDBsum" id="4Y80"/>
<dbReference type="PDBsum" id="4Y81"/>
<dbReference type="PDBsum" id="4Y82"/>
<dbReference type="PDBsum" id="4Y84"/>
<dbReference type="PDBsum" id="4Y8G"/>
<dbReference type="PDBsum" id="4Y8H"/>
<dbReference type="PDBsum" id="4Y8I"/>
<dbReference type="PDBsum" id="4Y8J"/>
<dbReference type="PDBsum" id="4Y8K"/>
<dbReference type="PDBsum" id="4Y8L"/>
<dbReference type="PDBsum" id="4Y8M"/>
<dbReference type="PDBsum" id="4Y8N"/>
<dbReference type="PDBsum" id="4Y8O"/>
<dbReference type="PDBsum" id="4Y8P"/>
<dbReference type="PDBsum" id="4Y8Q"/>
<dbReference type="PDBsum" id="4Y8R"/>
<dbReference type="PDBsum" id="4Y8S"/>
<dbReference type="PDBsum" id="4Y8T"/>
<dbReference type="PDBsum" id="4Y8U"/>
<dbReference type="PDBsum" id="4Y9Y"/>
<dbReference type="PDBsum" id="4Y9Z"/>
<dbReference type="PDBsum" id="4YA0"/>
<dbReference type="PDBsum" id="4YA1"/>
<dbReference type="PDBsum" id="4YA2"/>
<dbReference type="PDBsum" id="4YA3"/>
<dbReference type="PDBsum" id="4YA4"/>
<dbReference type="PDBsum" id="4YA5"/>
<dbReference type="PDBsum" id="4YA7"/>
<dbReference type="PDBsum" id="4YA9"/>
<dbReference type="PDBsum" id="4Z1L"/>
<dbReference type="PDBsum" id="5A5B"/>
<dbReference type="PDBsum" id="5AHJ"/>
<dbReference type="PDBsum" id="5BOU"/>
<dbReference type="PDBsum" id="5BXL"/>
<dbReference type="PDBsum" id="5BXN"/>
<dbReference type="PDBsum" id="5CGF"/>
<dbReference type="PDBsum" id="5CGG"/>
<dbReference type="PDBsum" id="5CGH"/>
<dbReference type="PDBsum" id="5CGI"/>
<dbReference type="PDBsum" id="5CZ4"/>
<dbReference type="PDBsum" id="5CZ5"/>
<dbReference type="PDBsum" id="5CZ6"/>
<dbReference type="PDBsum" id="5CZ7"/>
<dbReference type="PDBsum" id="5CZ8"/>
<dbReference type="PDBsum" id="5CZ9"/>
<dbReference type="PDBsum" id="5CZA"/>
<dbReference type="PDBsum" id="5D0S"/>
<dbReference type="PDBsum" id="5D0T"/>
<dbReference type="PDBsum" id="5D0V"/>
<dbReference type="PDBsum" id="5D0W"/>
<dbReference type="PDBsum" id="5D0X"/>
<dbReference type="PDBsum" id="5D0Z"/>
<dbReference type="PDBsum" id="5DKI"/>
<dbReference type="PDBsum" id="5DKJ"/>
<dbReference type="PDBsum" id="5FG7"/>
<dbReference type="PDBsum" id="5FG9"/>
<dbReference type="PDBsum" id="5FGA"/>
<dbReference type="PDBsum" id="5FGD"/>
<dbReference type="PDBsum" id="5FGE"/>
<dbReference type="PDBsum" id="5FGF"/>
<dbReference type="PDBsum" id="5FGG"/>
<dbReference type="PDBsum" id="5FGH"/>
<dbReference type="PDBsum" id="5FGI"/>
<dbReference type="PDBsum" id="5FHS"/>
<dbReference type="PDBsum" id="5JHR"/>
<dbReference type="PDBsum" id="5JHS"/>
<dbReference type="PDBsum" id="5L52"/>
<dbReference type="PDBsum" id="5L54"/>
<dbReference type="PDBsum" id="5L55"/>
<dbReference type="PDBsum" id="5L5A"/>
<dbReference type="PDBsum" id="5L5B"/>
<dbReference type="PDBsum" id="5L5D"/>
<dbReference type="PDBsum" id="5L5E"/>
<dbReference type="PDBsum" id="5L5F"/>
<dbReference type="PDBsum" id="5L5H"/>
<dbReference type="PDBsum" id="5L5I"/>
<dbReference type="PDBsum" id="5L5J"/>
<dbReference type="PDBsum" id="5L5O"/>
<dbReference type="PDBsum" id="5L5P"/>
<dbReference type="PDBsum" id="5L5Q"/>
<dbReference type="PDBsum" id="5L5R"/>
<dbReference type="PDBsum" id="5L5S"/>
<dbReference type="PDBsum" id="5L5T"/>
<dbReference type="PDBsum" id="5L5U"/>
<dbReference type="PDBsum" id="5L5V"/>
<dbReference type="PDBsum" id="5L5W"/>
<dbReference type="PDBsum" id="5L5X"/>
<dbReference type="PDBsum" id="5L5Y"/>
<dbReference type="PDBsum" id="5L5Z"/>
<dbReference type="PDBsum" id="5L60"/>
<dbReference type="PDBsum" id="5L61"/>
<dbReference type="PDBsum" id="5L62"/>
<dbReference type="PDBsum" id="5L63"/>
<dbReference type="PDBsum" id="5L64"/>
<dbReference type="PDBsum" id="5L65"/>
<dbReference type="PDBsum" id="5L66"/>
<dbReference type="PDBsum" id="5L67"/>
<dbReference type="PDBsum" id="5L68"/>
<dbReference type="PDBsum" id="5L69"/>
<dbReference type="PDBsum" id="5L6A"/>
<dbReference type="PDBsum" id="5L6B"/>
<dbReference type="PDBsum" id="5L6C"/>
<dbReference type="PDBsum" id="5LAI"/>
<dbReference type="PDBsum" id="5LAJ"/>
<dbReference type="PDBsum" id="5LTT"/>
<dbReference type="PDBsum" id="5M2B"/>
<dbReference type="PDBsum" id="5MP9"/>
<dbReference type="PDBsum" id="5MPA"/>
<dbReference type="PDBsum" id="5MPB"/>
<dbReference type="PDBsum" id="5MPC"/>
<dbReference type="PDBsum" id="5NIF"/>
<dbReference type="PDBsum" id="5WVI"/>
<dbReference type="PDBsum" id="5WVK"/>
<dbReference type="PDBsum" id="6EF0"/>
<dbReference type="PDBsum" id="6EF1"/>
<dbReference type="PDBsum" id="6EF2"/>
<dbReference type="PDBsum" id="6EF3"/>
<dbReference type="PDBsum" id="6FVT"/>
<dbReference type="PDBsum" id="6FVU"/>
<dbReference type="PDBsum" id="6FVV"/>
<dbReference type="PDBsum" id="6FVW"/>
<dbReference type="PDBsum" id="6FVX"/>
<dbReference type="PDBsum" id="6FVY"/>
<dbReference type="PDBsum" id="6G7F"/>
<dbReference type="PDBsum" id="6G8M"/>
<dbReference type="PDBsum" id="6G8N"/>
<dbReference type="PDBsum" id="6GOP"/>
<dbReference type="PDBsum" id="6H39"/>
<dbReference type="PDBsum" id="6HTB"/>
<dbReference type="PDBsum" id="6HTC"/>
<dbReference type="PDBsum" id="6HTD"/>
<dbReference type="PDBsum" id="6HTP"/>
<dbReference type="PDBsum" id="6HTR"/>
<dbReference type="PDBsum" id="6HUB"/>
<dbReference type="PDBsum" id="6HUC"/>
<dbReference type="PDBsum" id="6HUQ"/>
<dbReference type="PDBsum" id="6HUU"/>
<dbReference type="PDBsum" id="6HUV"/>
<dbReference type="PDBsum" id="6HV3"/>
<dbReference type="PDBsum" id="6HV4"/>
<dbReference type="PDBsum" id="6HV5"/>
<dbReference type="PDBsum" id="6HV7"/>
<dbReference type="PDBsum" id="6HVA"/>
<dbReference type="PDBsum" id="6HVR"/>
<dbReference type="PDBsum" id="6HVS"/>
<dbReference type="PDBsum" id="6HVT"/>
<dbReference type="PDBsum" id="6HVU"/>
<dbReference type="PDBsum" id="6HVV"/>
<dbReference type="PDBsum" id="6HVW"/>
<dbReference type="PDBsum" id="6HVX"/>
<dbReference type="PDBsum" id="6HVY"/>
<dbReference type="PDBsum" id="6HW0"/>
<dbReference type="PDBsum" id="6HW3"/>
<dbReference type="PDBsum" id="6HW4"/>
<dbReference type="PDBsum" id="6HW5"/>
<dbReference type="PDBsum" id="6HW6"/>
<dbReference type="PDBsum" id="6HW7"/>
<dbReference type="PDBsum" id="6HW8"/>
<dbReference type="PDBsum" id="6HW9"/>
<dbReference type="PDBsum" id="6HWA"/>
<dbReference type="PDBsum" id="6HWB"/>
<dbReference type="PDBsum" id="6HWC"/>
<dbReference type="PDBsum" id="6HWD"/>
<dbReference type="PDBsum" id="6HWE"/>
<dbReference type="PDBsum" id="6HWF"/>
<dbReference type="PDBsum" id="6J2C"/>
<dbReference type="PDBsum" id="6J2N"/>
<dbReference type="PDBsum" id="6J2Q"/>
<dbReference type="PDBsum" id="6J2X"/>
<dbReference type="PDBsum" id="6J30"/>
<dbReference type="PDBsum" id="6ZOU"/>
<dbReference type="PDBsum" id="6ZP6"/>
<dbReference type="PDBsum" id="6ZP8"/>
<dbReference type="PDBsum" id="7LS5"/>
<dbReference type="PDBsum" id="7LS6"/>
<dbReference type="PDBsum" id="7LSX"/>
<dbReference type="PDBsum" id="7O2L"/>
<dbReference type="PDBsum" id="7QO3"/>
<dbReference type="PDBsum" id="7QO5"/>
<dbReference type="PDBsum" id="8BW1"/>
<dbReference type="PDBsum" id="8OHZ"/>
<dbReference type="PDBsum" id="8OI1"/>
<dbReference type="PDBsum" id="8OLR"/>
<dbReference type="PDBsum" id="8RHJ"/>
<dbReference type="PDBsum" id="8RHK"/>
<dbReference type="PDBsum" id="8RHL"/>
<dbReference type="PDBsum" id="8RVL"/>
<dbReference type="PDBsum" id="8RVO"/>
<dbReference type="PDBsum" id="8RVP"/>
<dbReference type="PDBsum" id="8RVQ"/>
<dbReference type="PDBsum" id="8T08"/>
<dbReference type="PDBsum" id="8T0M"/>
<dbReference type="PDBsum" id="8U6Y"/>
<dbReference type="PDBsum" id="8U7U"/>
<dbReference type="PDBsum" id="9D0T"/>
<dbReference type="PDBsum" id="9EY9"/>
<dbReference type="PDBsum" id="9FST"/>
<dbReference type="PDBsum" id="9FSV"/>
<dbReference type="PDBsum" id="9FT0"/>
<dbReference type="PDBsum" id="9FT1"/>
<dbReference type="PDBsum" id="9GBK"/>
<dbReference type="EMDB" id="EMD-14082"/>
<dbReference type="EMDB" id="EMD-14084"/>
<dbReference type="EMDB" id="EMD-19523"/>
<dbReference type="EMDB" id="EMD-19527"/>
<dbReference type="EMDB" id="EMD-19528"/>
<dbReference type="EMDB" id="EMD-19529"/>
<dbReference type="EMDB" id="EMD-23502"/>
<dbReference type="EMDB" id="EMD-23503"/>
<dbReference type="EMDB" id="EMD-23508"/>
<dbReference type="EMDB" id="EMD-3534"/>
<dbReference type="EMDB" id="EMD-3535"/>
<dbReference type="EMDB" id="EMD-3536"/>
<dbReference type="EMDB" id="EMD-3537"/>
<dbReference type="EMDB" id="EMD-40938"/>
<dbReference type="EMDB" id="EMD-40944"/>
<dbReference type="EMDB" id="EMD-41963"/>
<dbReference type="EMDB" id="EMD-41993"/>
<dbReference type="EMDB" id="EMD-4321"/>
<dbReference type="EMDB" id="EMD-4322"/>
<dbReference type="EMDB" id="EMD-4323"/>
<dbReference type="EMDB" id="EMD-4324"/>
<dbReference type="EMDB" id="EMD-46461"/>
<dbReference type="EMDB" id="EMD-51221"/>
<dbReference type="EMDB" id="EMD-6693"/>
<dbReference type="EMDB" id="EMD-6694"/>
<dbReference type="EMDB" id="EMD-9042"/>
<dbReference type="EMDB" id="EMD-9043"/>
<dbReference type="EMDB" id="EMD-9044"/>
<dbReference type="EMDB" id="EMD-9045"/>
<dbReference type="EMDB" id="EMD-9769"/>
<dbReference type="EMDB" id="EMD-9770"/>
<dbReference type="EMDB" id="EMD-9771"/>
<dbReference type="EMDB" id="EMD-9772"/>
<dbReference type="EMDB" id="EMD-9773"/>
<dbReference type="SMR" id="P23638"/>
<dbReference type="BioGRID" id="33383">
    <property type="interactions" value="553"/>
</dbReference>
<dbReference type="ComplexPortal" id="CPX-2262">
    <property type="entry name" value="26S proteasome complex"/>
</dbReference>
<dbReference type="DIP" id="DIP-2823N"/>
<dbReference type="FunCoup" id="P23638">
    <property type="interactions" value="1127"/>
</dbReference>
<dbReference type="IntAct" id="P23638">
    <property type="interactions" value="49"/>
</dbReference>
<dbReference type="MINT" id="P23638"/>
<dbReference type="STRING" id="4932.YGR135W"/>
<dbReference type="MEROPS" id="T01.973"/>
<dbReference type="iPTMnet" id="P23638"/>
<dbReference type="PaxDb" id="4932-YGR135W"/>
<dbReference type="PeptideAtlas" id="P23638"/>
<dbReference type="EnsemblFungi" id="YGR135W_mRNA">
    <property type="protein sequence ID" value="YGR135W"/>
    <property type="gene ID" value="YGR135W"/>
</dbReference>
<dbReference type="GeneID" id="853036"/>
<dbReference type="KEGG" id="sce:YGR135W"/>
<dbReference type="AGR" id="SGD:S000003367"/>
<dbReference type="SGD" id="S000003367">
    <property type="gene designation" value="PRE9"/>
</dbReference>
<dbReference type="VEuPathDB" id="FungiDB:YGR135W"/>
<dbReference type="eggNOG" id="KOG0178">
    <property type="taxonomic scope" value="Eukaryota"/>
</dbReference>
<dbReference type="GeneTree" id="ENSGT00550000074827"/>
<dbReference type="HOGENOM" id="CLU_035750_4_3_1"/>
<dbReference type="InParanoid" id="P23638"/>
<dbReference type="OMA" id="YVLNDNM"/>
<dbReference type="OrthoDB" id="431557at2759"/>
<dbReference type="BioCyc" id="YEAST:G3O-30841-MONOMER"/>
<dbReference type="Reactome" id="R-SCE-1236978">
    <property type="pathway name" value="Cross-presentation of soluble exogenous antigens (endosomes)"/>
</dbReference>
<dbReference type="Reactome" id="R-SCE-5668541">
    <property type="pathway name" value="TNFR2 non-canonical NF-kB pathway"/>
</dbReference>
<dbReference type="Reactome" id="R-SCE-5687128">
    <property type="pathway name" value="MAPK6/MAPK4 signaling"/>
</dbReference>
<dbReference type="Reactome" id="R-SCE-5689880">
    <property type="pathway name" value="Ub-specific processing proteases"/>
</dbReference>
<dbReference type="Reactome" id="R-SCE-68949">
    <property type="pathway name" value="Orc1 removal from chromatin"/>
</dbReference>
<dbReference type="Reactome" id="R-SCE-69017">
    <property type="pathway name" value="CDK-mediated phosphorylation and removal of Cdc6"/>
</dbReference>
<dbReference type="Reactome" id="R-SCE-69601">
    <property type="pathway name" value="Ubiquitin Mediated Degradation of Phosphorylated Cdc25A"/>
</dbReference>
<dbReference type="Reactome" id="R-SCE-8854050">
    <property type="pathway name" value="FBXL7 down-regulates AURKA during mitotic entry and in early mitosis"/>
</dbReference>
<dbReference type="Reactome" id="R-SCE-8948751">
    <property type="pathway name" value="Regulation of PTEN stability and activity"/>
</dbReference>
<dbReference type="Reactome" id="R-SCE-8951664">
    <property type="pathway name" value="Neddylation"/>
</dbReference>
<dbReference type="Reactome" id="R-SCE-9755511">
    <property type="pathway name" value="KEAP1-NFE2L2 pathway"/>
</dbReference>
<dbReference type="Reactome" id="R-SCE-983168">
    <property type="pathway name" value="Antigen processing: Ubiquitination &amp; Proteasome degradation"/>
</dbReference>
<dbReference type="Reactome" id="R-SCE-9907900">
    <property type="pathway name" value="Proteasome assembly"/>
</dbReference>
<dbReference type="BioGRID-ORCS" id="853036">
    <property type="hits" value="6 hits in 10 CRISPR screens"/>
</dbReference>
<dbReference type="EvolutionaryTrace" id="P23638"/>
<dbReference type="PRO" id="PR:P23638"/>
<dbReference type="Proteomes" id="UP000002311">
    <property type="component" value="Chromosome VII"/>
</dbReference>
<dbReference type="RNAct" id="P23638">
    <property type="molecule type" value="protein"/>
</dbReference>
<dbReference type="GO" id="GO:0005829">
    <property type="term" value="C:cytosol"/>
    <property type="evidence" value="ECO:0000318"/>
    <property type="project" value="GO_Central"/>
</dbReference>
<dbReference type="GO" id="GO:0005634">
    <property type="term" value="C:nucleus"/>
    <property type="evidence" value="ECO:0000318"/>
    <property type="project" value="GO_Central"/>
</dbReference>
<dbReference type="GO" id="GO:0000502">
    <property type="term" value="C:proteasome complex"/>
    <property type="evidence" value="ECO:0000353"/>
    <property type="project" value="ComplexPortal"/>
</dbReference>
<dbReference type="GO" id="GO:0019773">
    <property type="term" value="C:proteasome core complex, alpha-subunit complex"/>
    <property type="evidence" value="ECO:0000314"/>
    <property type="project" value="SGD"/>
</dbReference>
<dbReference type="GO" id="GO:0034515">
    <property type="term" value="C:proteasome storage granule"/>
    <property type="evidence" value="ECO:0000314"/>
    <property type="project" value="SGD"/>
</dbReference>
<dbReference type="GO" id="GO:0010499">
    <property type="term" value="P:proteasomal ubiquitin-independent protein catabolic process"/>
    <property type="evidence" value="ECO:0000314"/>
    <property type="project" value="SGD"/>
</dbReference>
<dbReference type="GO" id="GO:0080129">
    <property type="term" value="P:proteasome core complex assembly"/>
    <property type="evidence" value="ECO:0000315"/>
    <property type="project" value="SGD"/>
</dbReference>
<dbReference type="GO" id="GO:0043161">
    <property type="term" value="P:proteasome-mediated ubiquitin-dependent protein catabolic process"/>
    <property type="evidence" value="ECO:0000314"/>
    <property type="project" value="SGD"/>
</dbReference>
<dbReference type="CDD" id="cd03752">
    <property type="entry name" value="proteasome_alpha_type_4"/>
    <property type="match status" value="1"/>
</dbReference>
<dbReference type="FunFam" id="3.60.20.10:FF:000009">
    <property type="entry name" value="Proteasome subunit alpha type-3"/>
    <property type="match status" value="1"/>
</dbReference>
<dbReference type="Gene3D" id="3.60.20.10">
    <property type="entry name" value="Glutamine Phosphoribosylpyrophosphate, subunit 1, domain 1"/>
    <property type="match status" value="1"/>
</dbReference>
<dbReference type="InterPro" id="IPR029055">
    <property type="entry name" value="Ntn_hydrolases_N"/>
</dbReference>
<dbReference type="InterPro" id="IPR050115">
    <property type="entry name" value="Proteasome_alpha"/>
</dbReference>
<dbReference type="InterPro" id="IPR023332">
    <property type="entry name" value="Proteasome_alpha-type"/>
</dbReference>
<dbReference type="InterPro" id="IPR000426">
    <property type="entry name" value="Proteasome_asu_N"/>
</dbReference>
<dbReference type="InterPro" id="IPR016050">
    <property type="entry name" value="Proteasome_bsu_CS"/>
</dbReference>
<dbReference type="InterPro" id="IPR001353">
    <property type="entry name" value="Proteasome_sua/b"/>
</dbReference>
<dbReference type="NCBIfam" id="NF003075">
    <property type="entry name" value="PRK03996.1"/>
    <property type="match status" value="1"/>
</dbReference>
<dbReference type="PANTHER" id="PTHR11599">
    <property type="entry name" value="PROTEASOME SUBUNIT ALPHA/BETA"/>
    <property type="match status" value="1"/>
</dbReference>
<dbReference type="Pfam" id="PF00227">
    <property type="entry name" value="Proteasome"/>
    <property type="match status" value="1"/>
</dbReference>
<dbReference type="Pfam" id="PF10584">
    <property type="entry name" value="Proteasome_A_N"/>
    <property type="match status" value="1"/>
</dbReference>
<dbReference type="SMART" id="SM00948">
    <property type="entry name" value="Proteasome_A_N"/>
    <property type="match status" value="1"/>
</dbReference>
<dbReference type="SUPFAM" id="SSF56235">
    <property type="entry name" value="N-terminal nucleophile aminohydrolases (Ntn hydrolases)"/>
    <property type="match status" value="1"/>
</dbReference>
<dbReference type="PROSITE" id="PS00388">
    <property type="entry name" value="PROTEASOME_ALPHA_1"/>
    <property type="match status" value="1"/>
</dbReference>
<dbReference type="PROSITE" id="PS51475">
    <property type="entry name" value="PROTEASOME_ALPHA_2"/>
    <property type="match status" value="1"/>
</dbReference>
<organism>
    <name type="scientific">Saccharomyces cerevisiae (strain ATCC 204508 / S288c)</name>
    <name type="common">Baker's yeast</name>
    <dbReference type="NCBI Taxonomy" id="559292"/>
    <lineage>
        <taxon>Eukaryota</taxon>
        <taxon>Fungi</taxon>
        <taxon>Dikarya</taxon>
        <taxon>Ascomycota</taxon>
        <taxon>Saccharomycotina</taxon>
        <taxon>Saccharomycetes</taxon>
        <taxon>Saccharomycetales</taxon>
        <taxon>Saccharomycetaceae</taxon>
        <taxon>Saccharomyces</taxon>
    </lineage>
</organism>